<reference key="1">
    <citation type="journal article" date="1993" name="Proc. Natl. Acad. Sci. U.S.A.">
        <title>Ligand-specific activation of HER4/p180erbB4, a fourth member of the epidermal growth factor receptor family.</title>
        <authorList>
            <person name="Plowman G.D."/>
            <person name="Culouscou J.-M."/>
            <person name="Whitney G.S."/>
            <person name="Green J.M."/>
            <person name="Carlton G.W."/>
            <person name="Foy L."/>
            <person name="Neubauer M.G."/>
            <person name="Shoyab M."/>
        </authorList>
    </citation>
    <scope>NUCLEOTIDE SEQUENCE [MRNA] (ISOFORM JM-A CYT-1)</scope>
    <scope>FUNCTION AS CELL SURFACE RECEPTOR</scope>
    <scope>AUTOPHOSPHORYLATION</scope>
    <scope>SUBCELLULAR LOCATION</scope>
    <scope>TISSUE SPECIFICITY</scope>
    <source>
        <tissue>Mammary carcinoma</tissue>
    </source>
</reference>
<reference key="2">
    <citation type="journal article" date="1997" name="J. Biol. Chem.">
        <title>A novel juxtamembrane domain isoform of HER4/ErbB4. Isoform-specific tissue distribution and differential processing in response to phorbol ester.</title>
        <authorList>
            <person name="Elenius K."/>
            <person name="Corfas G."/>
            <person name="Paul S."/>
            <person name="Choi C.J."/>
            <person name="Rio C."/>
            <person name="Plowman G.D."/>
            <person name="Klagsbrun M."/>
        </authorList>
    </citation>
    <scope>NUCLEOTIDE SEQUENCE [MRNA] (ISOFORMS JM-A CYT-1 AND JM-B CYT-1)</scope>
    <scope>TISSUE SPECIFICITY</scope>
    <scope>FUNCTION AS CELL SURFACE RECEPTOR FOR NRG1 AND BTC</scope>
    <scope>SUBCELLULAR LOCATION</scope>
    <scope>AUTOPHOSPHORYLATION</scope>
    <scope>PROTEOLYTIC PROCESSING</scope>
    <source>
        <tissue>Fetal brain</tissue>
    </source>
</reference>
<reference key="3">
    <citation type="journal article" date="2004" name="Genome Res.">
        <title>The status, quality, and expansion of the NIH full-length cDNA project: the Mammalian Gene Collection (MGC).</title>
        <authorList>
            <consortium name="The MGC Project Team"/>
        </authorList>
    </citation>
    <scope>NUCLEOTIDE SEQUENCE [LARGE SCALE MRNA] (ISOFORMS JM-A CYT-1; JM-B CYT-1; JM-A CYT-2 AND JM-B CYT-2)</scope>
    <source>
        <tissue>Brain</tissue>
    </source>
</reference>
<reference key="4">
    <citation type="submission" date="2005-03" db="EMBL/GenBank/DDBJ databases">
        <authorList>
            <person name="Totoki Y."/>
            <person name="Toyoda A."/>
            <person name="Takeda T."/>
            <person name="Sakaki Y."/>
            <person name="Tanaka A."/>
            <person name="Yokoyama S."/>
            <person name="Ohara O."/>
            <person name="Nagase T."/>
            <person name="Kikuno R.F."/>
        </authorList>
    </citation>
    <scope>NUCLEOTIDE SEQUENCE [LARGE SCALE MRNA] OF 401-1308 (ISOFORM JM-A CYT-2)</scope>
    <source>
        <tissue>Brain</tissue>
    </source>
</reference>
<reference key="5">
    <citation type="journal article" date="1993" name="J. Biol. Chem.">
        <title>Characterization of a breast cancer cell differentiation factor that specifically activates the HER4/p180erbB4 receptor.</title>
        <authorList>
            <person name="Culouscou J.-M."/>
            <person name="Plowman G.D."/>
            <person name="Carlton G.W."/>
            <person name="Green J.M."/>
            <person name="Shoyab M."/>
        </authorList>
    </citation>
    <scope>INTERACTION WITH NRG1</scope>
    <scope>AUTOPHOSPHORYLATION</scope>
</reference>
<reference key="6">
    <citation type="journal article" date="1993" name="Nature">
        <title>Heregulin induces tyrosine phosphorylation of HER4/p180erbB4.</title>
        <authorList>
            <person name="Plowman G.D."/>
            <person name="Green J.M."/>
            <person name="Culouscou J.M."/>
            <person name="Carlton G.W."/>
            <person name="Rothwell V.M."/>
            <person name="Buckley S."/>
        </authorList>
    </citation>
    <scope>INTERACTION WITH NRG1</scope>
    <scope>AUTOPHOSPHORYLATION</scope>
</reference>
<reference key="7">
    <citation type="journal article" date="1996" name="J. Biol. Chem.">
        <title>HER4-mediated biological and biochemical properties in NIH 3T3 cells. Evidence for HER1-HER4 heterodimers.</title>
        <authorList>
            <person name="Cohen B.D."/>
            <person name="Green J.M."/>
            <person name="Foy L."/>
            <person name="Fell H.P."/>
        </authorList>
    </citation>
    <scope>FUNCTION AS NRG1 RECEPTOR IN REGULATION OF CELL PROLIFERATION</scope>
    <scope>CATALYTIC ACTIVITY</scope>
    <scope>ACTIVITY REGULATION</scope>
    <scope>AUTOPHOSPHORYLATION</scope>
    <scope>PHOSPHORYLATION AT TYR-1056; TYR-1188 AND TYR-1242</scope>
    <scope>INTERACTION WITH EGFR; SHC1 AND PIK3R1</scope>
</reference>
<reference key="8">
    <citation type="journal article" date="1996" name="Oncogene">
        <title>Betacellulin activates the epidermal growth factor receptor and erbB-4, and induces cellular response patterns distinct from those stimulated by epidermal growth factor or neuregulin-beta.</title>
        <authorList>
            <person name="Riese D.J. II"/>
            <person name="Bermingham Y."/>
            <person name="van Raaij T.M."/>
            <person name="Buckley S."/>
            <person name="Plowman G.D."/>
            <person name="Stern D.F."/>
        </authorList>
    </citation>
    <scope>INTERACTION WITH BTC</scope>
    <scope>AUTOPHOSPHORYLATION</scope>
</reference>
<reference key="9">
    <citation type="journal article" date="1997" name="EMBO J.">
        <title>Activation of HER4 by heparin-binding EGF-like growth factor stimulates chemotaxis but not proliferation.</title>
        <authorList>
            <person name="Elenius K."/>
            <person name="Paul S."/>
            <person name="Allison G."/>
            <person name="Sun J."/>
            <person name="Klagsbrun M."/>
        </authorList>
    </citation>
    <scope>FUNCTION AS HBEGF RECEPTOR; IN CELL MIGRATION; CELL PROLIFERATION AND IN ACTIVATION OF PIK3R1</scope>
    <scope>INTERACTION WITH HBEGF AND PIK3R1</scope>
    <scope>AUTOPHOSPHORYLATION</scope>
</reference>
<reference key="10">
    <citation type="journal article" date="1997" name="Nature">
        <title>Neuregulin-2, a new ligand of ErbB3/ErbB4-receptor tyrosine kinases.</title>
        <authorList>
            <person name="Carraway K.L. III"/>
            <person name="Weber J.L."/>
            <person name="Unger M.J."/>
            <person name="Ledesma J."/>
            <person name="Yu N."/>
            <person name="Gassmann M."/>
            <person name="Lai C."/>
        </authorList>
    </citation>
    <scope>INTERACTION WITH NRG2</scope>
    <scope>FUNCTION AS NRG2 RECEPTOR</scope>
    <scope>PHOSPHORYLATION</scope>
</reference>
<reference key="11">
    <citation type="journal article" date="1997" name="Oncogene">
        <title>Epiregulin binds to epidermal growth factor receptor and ErbB-4 and induces tyrosine phosphorylation of epidermal growth factor receptor, ErbB-2, ErbB-3 and ErbB-4.</title>
        <authorList>
            <person name="Komurasaki T."/>
            <person name="Toyoda H."/>
            <person name="Uchida D."/>
            <person name="Morimoto S."/>
        </authorList>
    </citation>
    <scope>INTERACTION WITH EREG</scope>
    <scope>AUTOPHOSPHORYLATION</scope>
</reference>
<reference key="12">
    <citation type="journal article" date="1997" name="Proc. Natl. Acad. Sci. U.S.A.">
        <title>Neuregulin-3 (NRG3): a novel neural tissue-enriched protein that binds and activates ErbB4.</title>
        <authorList>
            <person name="Zhang D."/>
            <person name="Sliwkowski M.X."/>
            <person name="Mark M."/>
            <person name="Frantz G."/>
            <person name="Akita R."/>
            <person name="Sun Y."/>
            <person name="Hillan K."/>
            <person name="Crowley C."/>
            <person name="Brush J."/>
            <person name="Godowski P.J."/>
        </authorList>
    </citation>
    <scope>INTERACTION WITH NRG3</scope>
    <scope>AUTOPHOSPHORYLATION</scope>
</reference>
<reference key="13">
    <citation type="journal article" date="1998" name="J. Biol. Chem.">
        <title>Analysis of Grb7 recruitment by heregulin-activated erbB receptors reveals a novel target selectivity for erbB3.</title>
        <authorList>
            <person name="Fiddes R.J."/>
            <person name="Campbell D.H."/>
            <person name="Janes P.W."/>
            <person name="Sivertsen S.P."/>
            <person name="Sasaki H."/>
            <person name="Wallasch C."/>
            <person name="Daly R.J."/>
        </authorList>
    </citation>
    <scope>INTERACTION WITH GRB7</scope>
</reference>
<reference key="14">
    <citation type="journal article" date="1999" name="J. Biol. Chem.">
        <title>ErbB receptor-induced activation of stat transcription factors is mediated by Src tyrosine kinases.</title>
        <authorList>
            <person name="Olayioye M.A."/>
            <person name="Beuvink I."/>
            <person name="Horsch K."/>
            <person name="Daly J.M."/>
            <person name="Hynes N.E."/>
        </authorList>
    </citation>
    <scope>INTERACTION WITH ERBB2</scope>
    <scope>FUNCTION IN ACTIVATION OF STAT5A</scope>
</reference>
<reference key="15">
    <citation type="journal article" date="1999" name="Oncogene">
        <title>Characterization of a naturally occurring ErbB4 isoform that does not bind or activate phosphatidyl inositol 3-kinase.</title>
        <authorList>
            <person name="Elenius K."/>
            <person name="Choi C.J."/>
            <person name="Paul S."/>
            <person name="Santiestevan E."/>
            <person name="Nishi E."/>
            <person name="Klagsbrun M."/>
        </authorList>
    </citation>
    <scope>ALTERNATIVE SPLICING</scope>
    <scope>FUNCTION IN PHOSPHORYLATION AND ACTIVATION OF PIK3R1</scope>
    <scope>INTERACTION WITH NRG1 AND PIKR3R1</scope>
    <scope>AUTOPHOSPHORYLATION</scope>
    <scope>TISSUE SPECIFICITY</scope>
</reference>
<reference key="16">
    <citation type="journal article" date="1999" name="Oncogene">
        <title>Neuregulin-4: a novel growth factor that acts through the ErbB-4 receptor tyrosine kinase.</title>
        <authorList>
            <person name="Harari D."/>
            <person name="Tzahar E."/>
            <person name="Romano J."/>
            <person name="Shelly M."/>
            <person name="Pierce J.H."/>
            <person name="Andrews G.C."/>
            <person name="Yarden Y."/>
        </authorList>
    </citation>
    <scope>FUNCTION AS NRG4 RECEPTOR IN ACTIVATION OF MAPK1/ERK2 AND MAPK3/ERK1 AND IN CELL PROLIFERATION</scope>
    <scope>INTERACTION WITH NRG4</scope>
    <scope>SUBCELLULAR LOCATION</scope>
</reference>
<reference key="17">
    <citation type="journal article" date="2000" name="J. Biol. Chem.">
        <title>A natural ErbB4 isoform that does not activate phosphoinositide 3-kinase mediates proliferation but not survival or chemotaxis.</title>
        <authorList>
            <person name="Kainulainen V."/>
            <person name="Sundvall M."/>
            <person name="Maatta J.A."/>
            <person name="Santiestevan E."/>
            <person name="Klagsbrun M."/>
            <person name="Elenius K."/>
        </authorList>
    </citation>
    <scope>FUNCTION AS NRG1 RECEPTOR IN CELL PROLIFERATION; MIGRATION; SURVIVAL AND IN PHOSPHORYLATION OF SHC1; ACTIVATION OF MAPK1/ERK2 AND MAPK3/ERK1</scope>
    <scope>ALTERNATIVE SPLICING</scope>
</reference>
<reference key="18">
    <citation type="journal article" date="2000" name="J. Biol. Chem.">
        <title>Tumor necrosis factor-alpha-converting enzyme is required for cleavage of erbB4/HER4.</title>
        <authorList>
            <person name="Rio C."/>
            <person name="Buxbaum J.D."/>
            <person name="Peschon J.J."/>
            <person name="Corfas G."/>
        </authorList>
    </citation>
    <scope>PROTEOLYTIC PROCESSING</scope>
</reference>
<reference key="19">
    <citation type="journal article" date="2000" name="J. Biol. Chem.">
        <title>Ligand discrimination in signaling through an ErbB4 receptor homodimer.</title>
        <authorList>
            <person name="Sweeney C."/>
            <person name="Lai C."/>
            <person name="Riese D.J. II"/>
            <person name="Diamonti A.J."/>
            <person name="Cantley L.C."/>
            <person name="Carraway K.L. III"/>
        </authorList>
    </citation>
    <scope>FUNCTION IN ACTIVATION OF AKT1; MAPK1/ERK2 AND MAPK3/ERK1</scope>
    <scope>INTERACTION WITH PIK3R1; GRB2; SHC1; BTC; NRG1; NRG2 AND NRG3</scope>
    <scope>LIGAND-SPECIFIC AUTOPHOSPHORYLATION</scope>
</reference>
<reference key="20">
    <citation type="journal article" date="2000" name="Proc. Natl. Acad. Sci. U.S.A.">
        <title>The neuregulin receptor ErbB-4 interacts with PDZ-containing proteins at neuronal synapses.</title>
        <authorList>
            <person name="Garcia R.A."/>
            <person name="Vasudevan K."/>
            <person name="Buonanno A."/>
        </authorList>
    </citation>
    <scope>INTERACTION WITH DLG2; DLG3; DLG4 AND SNTB2</scope>
</reference>
<reference key="21">
    <citation type="journal article" date="2001" name="Biochem. Biophys. Res. Commun.">
        <title>BIBX1382BS, but not AG1478 or PD153035, inhibits the ErbB kinases at different concentrations in intact cells.</title>
        <authorList>
            <person name="Egeblad M."/>
            <person name="Mortensen O.H."/>
            <person name="van Kempen L.C."/>
            <person name="Jaattela M."/>
        </authorList>
    </citation>
    <scope>FUNCTION AS NRG1 RECEPTOR AND IN ACTIVATION OF MAP KINASES</scope>
    <scope>AUTOPHOSPHORYLATION</scope>
    <scope>ACTIVITY REGULATION</scope>
</reference>
<reference key="22">
    <citation type="journal article" date="2001" name="Mol. Cell. Biol.">
        <title>Her4 mediates ligand-dependent antiproliferative and differentiation responses in human breast cancer cells.</title>
        <authorList>
            <person name="Sartor C.I."/>
            <person name="Zhou H."/>
            <person name="Kozlowska E."/>
            <person name="Guttridge K."/>
            <person name="Kawata E."/>
            <person name="Caskey L."/>
            <person name="Harrelson J."/>
            <person name="Hynes N."/>
            <person name="Ethier S."/>
            <person name="Calvo B."/>
            <person name="Earp H.S. III"/>
        </authorList>
    </citation>
    <scope>MUTAGENESIS OF LYS-751</scope>
    <scope>FUNCTION IN PROMOTING CELL DIFFERENTIATION AND INHIBITING CELL PROLIFERATION</scope>
</reference>
<reference key="23">
    <citation type="journal article" date="2003" name="J. Biol. Chem.">
        <title>WW domain-containing protein YAP associates with ErbB-4 and acts as a co-transcriptional activator for the carboxyl-terminal fragment of ErbB-4 that translocates to the nucleus.</title>
        <authorList>
            <person name="Komuro A."/>
            <person name="Nagai M."/>
            <person name="Navin N.E."/>
            <person name="Sudol M."/>
        </authorList>
    </citation>
    <scope>FUNCTION</scope>
    <scope>PROTEOLYTIC PROCESSING</scope>
    <scope>SUBCELLULAR LOCATION</scope>
    <scope>INTERACTION WITH YAP1</scope>
    <scope>MUTAGENESIS OF TYR-1301</scope>
</reference>
<reference key="24">
    <citation type="journal article" date="2003" name="Mol. Cancer Res.">
        <title>Heregulin targets gamma-catenin to the nucleolus by a mechanism dependent on the DF3/MUC1 oncoprotein.</title>
        <authorList>
            <person name="Li Y."/>
            <person name="Yu W.-H."/>
            <person name="Ren J."/>
            <person name="Chen W."/>
            <person name="Huang L."/>
            <person name="Kharbanda S."/>
            <person name="Loda M."/>
            <person name="Kufe D."/>
        </authorList>
    </citation>
    <scope>INTERACTION WITH MUC1</scope>
</reference>
<reference key="25">
    <citation type="journal article" date="2004" name="J. Cell Biol.">
        <title>The ERBB4/HER4 receptor tyrosine kinase regulates gene expression by functioning as a STAT5A nuclear chaperone.</title>
        <authorList>
            <person name="Williams C.C."/>
            <person name="Allison J.G."/>
            <person name="Vidal G.A."/>
            <person name="Burow M.E."/>
            <person name="Beckman B.S."/>
            <person name="Marrero L."/>
            <person name="Jones F.E."/>
        </authorList>
    </citation>
    <scope>INTERACTION WITH STAT5A</scope>
    <scope>SUBCELLULAR LOCATION</scope>
    <scope>FUNCTION IN NUCLEAR LOCALIZATION OF STAT5A</scope>
    <scope>DNA-BINDING</scope>
    <scope>MUTAGENESIS OF 681-LYS--ARG-684</scope>
</reference>
<reference key="26">
    <citation type="journal article" date="2005" name="Cancer Res.">
        <title>WW domain-containing proteins, WWOX and YAP, compete for interaction with ErbB-4 and modulate its transcriptional function.</title>
        <authorList>
            <person name="Aqeilan R.I."/>
            <person name="Donati V."/>
            <person name="Palamarchuk A."/>
            <person name="Trapasso F."/>
            <person name="Kaou M."/>
            <person name="Pekarsky Y."/>
            <person name="Sudol M."/>
            <person name="Croce C.M."/>
        </authorList>
    </citation>
    <scope>INTERACTION WITH WWOX</scope>
    <scope>DOMAIN</scope>
    <scope>MUTAGENESIS OF TYR-1035 AND TYR-1301</scope>
</reference>
<reference key="27">
    <citation type="journal article" date="2005" name="J. Biol. Chem.">
        <title>Presenilin-dependent gamma-secretase processing regulates multiple ERBB4/HER4 activities.</title>
        <authorList>
            <person name="Vidal G.A."/>
            <person name="Naresh A."/>
            <person name="Marrero L."/>
            <person name="Jones F.E."/>
        </authorList>
    </citation>
    <scope>FUNCTION</scope>
    <scope>PROTEOLYTIC PROCESSING</scope>
    <scope>MUTAGENESIS OF VAL-675</scope>
</reference>
<reference key="28">
    <citation type="journal article" date="2006" name="Cancer Res.">
        <title>The ERBB4/HER4 intracellular domain 4ICD is a BH3-only protein promoting apoptosis of breast cancer cells.</title>
        <authorList>
            <person name="Naresh A."/>
            <person name="Long W."/>
            <person name="Vidal G.A."/>
            <person name="Wimley W.C."/>
            <person name="Marrero L."/>
            <person name="Sartor C.I."/>
            <person name="Tovey S."/>
            <person name="Cooke T.G."/>
            <person name="Bartlett J.M."/>
            <person name="Jones F.E."/>
        </authorList>
    </citation>
    <scope>FUNCTION IN PROMOTING APOPTOSIS</scope>
    <scope>SUBCELLULAR LOCATION</scope>
    <scope>INTERACTION WITH BCL2</scope>
</reference>
<reference key="29">
    <citation type="journal article" date="2006" name="J. Biol. Chem.">
        <title>ErbB-4 s80 intracellular domain abrogates ETO2-dependent transcriptional repression.</title>
        <authorList>
            <person name="Linggi B."/>
            <person name="Carpenter G."/>
        </authorList>
    </citation>
    <scope>INTERACTION WITH CBFA2T3</scope>
</reference>
<reference key="30">
    <citation type="journal article" date="2006" name="Mol. Biol. Cell">
        <title>Proteolytic cleavage and phosphorylation of a tumor-associated ErbB4 isoform promote ligand-independent survival and cancer cell growth.</title>
        <authorList>
            <person name="Maatta J.A."/>
            <person name="Sundvall M."/>
            <person name="Junttila T.T."/>
            <person name="Peri L."/>
            <person name="Laine V.J."/>
            <person name="Isola J."/>
            <person name="Egeblad M."/>
            <person name="Elenius K."/>
        </authorList>
    </citation>
    <scope>FUNCTION</scope>
    <scope>PHOSPHORYLATION</scope>
    <scope>SUBCELLULAR LOCATION</scope>
</reference>
<reference key="31">
    <citation type="journal article" date="2006" name="Mol. Biol. Cell">
        <title>The intracellular domain of ErbB4 induces differentiation of mammary epithelial cells.</title>
        <authorList>
            <person name="Muraoka-Cook R.S."/>
            <person name="Sandahl M."/>
            <person name="Husted C."/>
            <person name="Hunter D."/>
            <person name="Miraglia L."/>
            <person name="Feng S.M."/>
            <person name="Elenius K."/>
            <person name="Earp H.S. III"/>
        </authorList>
    </citation>
    <scope>FUNCTION IN DIFFERENTIATION OF MAMMARY EPITHELIUM</scope>
    <scope>PROTEOLYTIC PROCESSING</scope>
    <scope>AUTOPHOSPHORYLATION</scope>
    <scope>SUBCELLULAR LOCATION</scope>
    <scope>INTERACTION WITH STAT5A</scope>
</reference>
<reference key="32">
    <citation type="journal article" date="2006" name="Oncol. Res.">
        <title>Phosphorylation of ErbB4 on tyrosine 1056 is critical for ErbB4 coupling to inhibition of colony formation by human mammary cell lines.</title>
        <authorList>
            <person name="Pitfield S.E."/>
            <person name="Bryant I."/>
            <person name="Penington D.J."/>
            <person name="Park G."/>
            <person name="Riese D.J. II"/>
        </authorList>
    </citation>
    <scope>MUTAGENESIS OF GLN-646</scope>
    <scope>PHOSPHORYLATION AT TYR-1056</scope>
</reference>
<reference key="33">
    <citation type="journal article" date="2007" name="Cancer Res.">
        <title>HER4 D-box sequences regulate mitotic progression and degradation of the nuclear HER4 cleavage product s80HER4.</title>
        <authorList>
            <person name="Strunk K.E."/>
            <person name="Husted C."/>
            <person name="Miraglia L.C."/>
            <person name="Sandahl M."/>
            <person name="Rearick W.A."/>
            <person name="Hunter D.M."/>
            <person name="Earp H.S. III"/>
            <person name="Muraoka-Cook R.S."/>
        </authorList>
    </citation>
    <scope>FUNCTION OF ERBB4 INTRACELLULAR DOMAIN</scope>
    <scope>PROTEOLYTIC PROCESSING</scope>
    <scope>SUBCELLULAR LOCATION</scope>
    <scope>UBIQUITINATION OF ERBB4 INTRACELLULAR DOMAIN</scope>
    <scope>MUTAGENESIS OF VAL-675; LYS-751; ARG-992; LEU-995 AND ASP-1000</scope>
</reference>
<reference key="34">
    <citation type="journal article" date="2007" name="Cell. Signal.">
        <title>Neuregulin-1 only induces trans-phosphorylation between ErbB receptor heterodimer partners.</title>
        <authorList>
            <person name="Li Z."/>
            <person name="Mei Y."/>
            <person name="Liu X."/>
            <person name="Zhou M."/>
        </authorList>
    </citation>
    <scope>INTERACTION WITH ERBB2</scope>
    <scope>MUTAGENESIS OF ASP-843</scope>
    <scope>AUTOPHOSPHORYLATION IN TRANS</scope>
</reference>
<reference key="35">
    <citation type="journal article" date="2007" name="Oncogene">
        <title>Differential nuclear localization and kinase activity of alternative ErbB4 intracellular domains.</title>
        <authorList>
            <person name="Sundvall M."/>
            <person name="Peri L."/>
            <person name="Maatta J.A."/>
            <person name="Tvorogov D."/>
            <person name="Paatero I."/>
            <person name="Savisalo M."/>
            <person name="Silvennoinen O."/>
            <person name="Yarden Y."/>
            <person name="Elenius K."/>
        </authorList>
    </citation>
    <scope>FUNCTION OF E4ICD</scope>
    <scope>PHOSPHORYLATION</scope>
    <scope>SUBCELLULAR LOCATION OF E4ICD</scope>
    <scope>MUTAGENESIS OF LYS-751</scope>
</reference>
<reference key="36">
    <citation type="journal article" date="2008" name="Chem. Biol.">
        <title>System-wide investigation of ErbB4 reveals 19 sites of Tyr phosphorylation that are unusually selective in their recruitment properties.</title>
        <authorList>
            <person name="Kaushansky A."/>
            <person name="Gordus A."/>
            <person name="Budnik B.A."/>
            <person name="Lane W.S."/>
            <person name="Rush J."/>
            <person name="MacBeath G."/>
        </authorList>
    </citation>
    <scope>PHOSPHORYLATION AT TYR-875; TYR-1035; TYR-1056; TYR-1150; TYR-1162; TYR-1188; TYR-1202; TYR-1242; TYR-1258 AND TYR-1284</scope>
    <scope>INTERACTION WITH PIK3R1 AND STAT1</scope>
    <scope>IDENTIFICATION BY MASS SPECTROMETRY</scope>
</reference>
<reference key="37">
    <citation type="journal article" date="2009" name="FASEB J.">
        <title>Nedd4 mediates ErbB4 JM-a/CYT-1 ICD ubiquitination and degradation in MDCK II cells.</title>
        <authorList>
            <person name="Zeng F."/>
            <person name="Xu J."/>
            <person name="Harris R.C."/>
        </authorList>
    </citation>
    <scope>INTERACTION WITH NEDD4</scope>
    <scope>SUBCELLULAR LOCATION</scope>
    <scope>UBIQUITINATION OF E4ICD1</scope>
</reference>
<reference key="38">
    <citation type="journal article" date="2009" name="J. Biol. Chem.">
        <title>Somatic mutations of ErbB4: selective loss-of-function phenotype affecting signal transduction pathways in cancer.</title>
        <authorList>
            <person name="Tvorogov D."/>
            <person name="Sundvall M."/>
            <person name="Kurppa K."/>
            <person name="Hollmen M."/>
            <person name="Repo S."/>
            <person name="Johnson M.S."/>
            <person name="Elenius K."/>
        </authorList>
    </citation>
    <scope>FUNCTION IN ACTIVATION OF SIGNALING PATHWAYS</scope>
    <scope>INTERACTION WITH ERBB2</scope>
    <scope>CATALYTIC ACTIVITY</scope>
    <scope>AUTOPHOSPHORYLATION</scope>
    <scope>PHOSPHORYLATION BY ERBB2</scope>
    <scope>ACTIVITY REGULATION</scope>
    <scope>MUTAGENESIS OF VAL-721; ALA-773; ARG-782; GLU-810; PRO-854; ASP-861; GLU-872 AND THR-926</scope>
</reference>
<reference key="39">
    <citation type="journal article" date="2009" name="Oncogene">
        <title>WW domain containing E3 ubiquitin protein ligase 1 targets the full-length ErbB4 for ubiquitin-mediated degradation in breast cancer.</title>
        <authorList>
            <person name="Li Y."/>
            <person name="Zhou Z."/>
            <person name="Alimandi M."/>
            <person name="Chen C."/>
        </authorList>
    </citation>
    <scope>INTERACTION WITH WWP1</scope>
    <scope>MUTAGENESIS OF TYR-1056 AND TYR-1301</scope>
</reference>
<reference key="40">
    <citation type="journal article" date="2010" name="Mol. Cancer Res.">
        <title>Interactions of ErbB4 and Kap1 connect the growth factor and DNA damage response pathways.</title>
        <authorList>
            <person name="Gilmore-Hebert M."/>
            <person name="Ramabhadran R."/>
            <person name="Stern D.F."/>
        </authorList>
    </citation>
    <scope>INTERACTION WITH TXNL4A; DDX23; MATR3; RBM15; ILF3; TRIM28; U5S1; U2SURP; ITCH; HNRNPU; AP2A1; NULC; LEO1; WWP2; MDM2; HXK1 AND SRRT</scope>
    <scope>FUNCTION</scope>
    <scope>SUBCELLULAR LOCATION</scope>
    <scope>IDENTIFICATION BY MASS SPECTROMETRY</scope>
</reference>
<reference key="41">
    <citation type="journal article" date="2011" name="Exp. Cell Res.">
        <title>Small tyrosine kinase inhibitors interrupt EGFR signaling by interacting with erbB3 and erbB4 in glioblastoma cell lines.</title>
        <authorList>
            <person name="Carrasco-Garcia E."/>
            <person name="Saceda M."/>
            <person name="Grasso S."/>
            <person name="Rocamora-Reverte L."/>
            <person name="Conde M."/>
            <person name="Gomez-Martinez A."/>
            <person name="Garcia-Morales P."/>
            <person name="Ferragut J.A."/>
            <person name="Martinez-Lacaci I."/>
        </authorList>
    </citation>
    <scope>ACTIVITY REGULATION</scope>
</reference>
<reference key="42">
    <citation type="journal article" date="2003" name="Cell Cycle">
        <title>ErbB4 signaling during breast and neural development: novel genetic models reveal unique ErbB4 activities.</title>
        <authorList>
            <person name="Jones F.E."/>
            <person name="Golding J.P."/>
            <person name="Gassmann M."/>
        </authorList>
    </citation>
    <scope>REVIEW ON ROLE IN BREAST AND NEURAL DEVELOPMENT</scope>
</reference>
<reference key="43">
    <citation type="journal article" date="2005" name="Histol. Histopathol.">
        <title>The diverse signaling network of EGFR, HER2, HER3 and HER4 tyrosine kinase receptors and the consequences for therapeutic approaches.</title>
        <authorList>
            <person name="Zaczek A."/>
            <person name="Brandt B."/>
            <person name="Bielawski K.P."/>
        </authorList>
    </citation>
    <scope>REVIEW</scope>
</reference>
<reference key="44">
    <citation type="journal article" date="2008" name="J. Mammary Gland Biol. Neoplasia">
        <title>ErbB4/HER4: role in mammary gland development, differentiation and growth inhibition.</title>
        <authorList>
            <person name="Muraoka-Cook R.S."/>
            <person name="Feng S.M."/>
            <person name="Strunk K.E."/>
            <person name="Earp H.S. III"/>
        </authorList>
    </citation>
    <scope>REVIEW ON ROLE IN MAMMARY GLAND DEVELOPMENT</scope>
</reference>
<reference key="45">
    <citation type="journal article" date="2008" name="J. Mammary Gland Biol. Neoplasia">
        <title>HER4 intracellular domain (4ICD) activity in the developing mammary gland and breast cancer.</title>
        <authorList>
            <person name="Jones F.E."/>
        </authorList>
    </citation>
    <scope>REVIEW ON ROLE OF THE ERBB4 INTRACELLULAR DOMAIN</scope>
</reference>
<reference key="46">
    <citation type="journal article" date="2008" name="J. Mammary Gland Biol. Neoplasia">
        <title>Role of ErbB4 in breast cancer.</title>
        <authorList>
            <person name="Sundvall M."/>
            <person name="Iljin K."/>
            <person name="Kilpinen S."/>
            <person name="Sara H."/>
            <person name="Kallioniemi O.P."/>
            <person name="Elenius K."/>
        </authorList>
    </citation>
    <scope>REVIEW ON LIGAND SPECIFICITY AND SIGNALING</scope>
</reference>
<reference key="47">
    <citation type="journal article" date="2010" name="Adv. Pharmacol.">
        <title>Neuregulin-1/ErbB signaling and chronic heart failure.</title>
        <authorList>
            <person name="Xu Y."/>
            <person name="Li X."/>
            <person name="Liu X."/>
            <person name="Zhou M."/>
        </authorList>
    </citation>
    <scope>REVIEW ON ROLE IN NRG1 SIGNALING AND CARDIOVASCULAR HEALTH</scope>
</reference>
<reference key="48">
    <citation type="journal article" date="2011" name="Cell Cycle">
        <title>Function of ERBB4 is determined by alternative splicing.</title>
        <authorList>
            <person name="Veikkolainen V."/>
            <person name="Vaparanta K."/>
            <person name="Halkilahti K."/>
            <person name="Iljin K."/>
            <person name="Sundvall M."/>
            <person name="Elenius K."/>
        </authorList>
    </citation>
    <scope>REVIEW ON ALTERNATIVE SPLICING AND PROTEOLYTIC PROCESSING; TISSUE SPECIFICITY; SIGNALING AND ROLE IN DISEASE</scope>
</reference>
<reference key="49">
    <citation type="journal article" date="2005" name="Proc. Natl. Acad. Sci. U.S.A.">
        <title>The extracellular region of ErbB4 adopts a tethered conformation in the absence of ligand.</title>
        <authorList>
            <person name="Bouyain S."/>
            <person name="Longo P.A."/>
            <person name="Li S."/>
            <person name="Ferguson K.M."/>
            <person name="Leahy D.J."/>
        </authorList>
    </citation>
    <scope>X-RAY CRYSTALLOGRAPHY (2.4 ANGSTROMS) OF 26-641</scope>
    <scope>DISULFIDE BONDS</scope>
    <scope>GLYCOSYLATION AT ASN-138; ASN-174; ASN-253; ASN-358; ASN-410; ASN-473; ASN-495 AND ASN-576</scope>
</reference>
<reference key="50">
    <citation type="journal article" date="2008" name="Proc. Natl. Acad. Sci. U.S.A.">
        <title>6-Ethynylthieno[3,2-d]- and 6-ethynylthieno[2,3-d]pyrimidin-4-anilines as tunable covalent modifiers of ErbB kinases.</title>
        <authorList>
            <person name="Wood E.R."/>
            <person name="Shewchuk L.M."/>
            <person name="Ellis B."/>
            <person name="Brignola P."/>
            <person name="Brashear R.L."/>
            <person name="Caferro T.R."/>
            <person name="Dickerson S.H."/>
            <person name="Dickson H.D."/>
            <person name="Donaldson K.H."/>
            <person name="Gaul M."/>
            <person name="Griffin R.J."/>
            <person name="Hassell A.M."/>
            <person name="Keith B."/>
            <person name="Mullin R."/>
            <person name="Petrov K.G."/>
            <person name="Reno M.J."/>
            <person name="Rusnak D.W."/>
            <person name="Tadepalli S.M."/>
            <person name="Ulrich J.C."/>
            <person name="Wagner C.D."/>
            <person name="Vanderwall D.E."/>
            <person name="Waterson A.G."/>
            <person name="Williams J.D."/>
            <person name="White W.L."/>
            <person name="Uehling D.E."/>
        </authorList>
    </citation>
    <scope>X-RAY CRYSTALLOGRAPHY (2.4 ANGSTROMS) OF 690-999 IN COMPLEX WITH INHIBITOR</scope>
    <scope>CATALYTIC ACTIVITY</scope>
    <scope>AUTOPHOSPHORYLATION</scope>
    <scope>MUTAGENESIS OF LEU-710; MET-766; LEU-864 AND ILE-947</scope>
</reference>
<reference key="51">
    <citation type="journal article" date="2008" name="Structure">
        <title>Mechanism of activation and inhibition of the HER4/ErbB4 kinase.</title>
        <authorList>
            <person name="Qiu C."/>
            <person name="Tarrant M.K."/>
            <person name="Choi S.H."/>
            <person name="Sathyamurthy A."/>
            <person name="Bose R."/>
            <person name="Banjade S."/>
            <person name="Pal A."/>
            <person name="Bornmann W.G."/>
            <person name="Lemmon M.A."/>
            <person name="Cole P.A."/>
            <person name="Leahy D.J."/>
        </authorList>
    </citation>
    <scope>X-RAY CRYSTALLOGRAPHY (2.5 ANGSTROMS) OF 702-1029 OF APOPROTEIN AND IN COMPLEX WITH LAPATINIB</scope>
    <scope>CATALYTIC ACTIVITY</scope>
    <scope>ACTIVITY REGULATION</scope>
    <scope>AUTOPHOSPHORYLATION</scope>
    <scope>SUBUNIT</scope>
</reference>
<reference key="52">
    <citation type="journal article" date="2007" name="Nature">
        <title>Patterns of somatic mutation in human cancer genomes.</title>
        <authorList>
            <person name="Greenman C."/>
            <person name="Stephens P."/>
            <person name="Smith R."/>
            <person name="Dalgliesh G.L."/>
            <person name="Hunter C."/>
            <person name="Bignell G."/>
            <person name="Davies H."/>
            <person name="Teague J."/>
            <person name="Butler A."/>
            <person name="Stevens C."/>
            <person name="Edkins S."/>
            <person name="O'Meara S."/>
            <person name="Vastrik I."/>
            <person name="Schmidt E.E."/>
            <person name="Avis T."/>
            <person name="Barthorpe S."/>
            <person name="Bhamra G."/>
            <person name="Buck G."/>
            <person name="Choudhury B."/>
            <person name="Clements J."/>
            <person name="Cole J."/>
            <person name="Dicks E."/>
            <person name="Forbes S."/>
            <person name="Gray K."/>
            <person name="Halliday K."/>
            <person name="Harrison R."/>
            <person name="Hills K."/>
            <person name="Hinton J."/>
            <person name="Jenkinson A."/>
            <person name="Jones D."/>
            <person name="Menzies A."/>
            <person name="Mironenko T."/>
            <person name="Perry J."/>
            <person name="Raine K."/>
            <person name="Richardson D."/>
            <person name="Shepherd R."/>
            <person name="Small A."/>
            <person name="Tofts C."/>
            <person name="Varian J."/>
            <person name="Webb T."/>
            <person name="West S."/>
            <person name="Widaa S."/>
            <person name="Yates A."/>
            <person name="Cahill D.P."/>
            <person name="Louis D.N."/>
            <person name="Goldstraw P."/>
            <person name="Nicholson A.G."/>
            <person name="Brasseur F."/>
            <person name="Looijenga L."/>
            <person name="Weber B.L."/>
            <person name="Chiew Y.-E."/>
            <person name="DeFazio A."/>
            <person name="Greaves M.F."/>
            <person name="Green A.R."/>
            <person name="Campbell P."/>
            <person name="Birney E."/>
            <person name="Easton D.F."/>
            <person name="Chenevix-Trench G."/>
            <person name="Tan M.-H."/>
            <person name="Khoo S.K."/>
            <person name="Teh B.T."/>
            <person name="Yuen S.T."/>
            <person name="Leung S.Y."/>
            <person name="Wooster R."/>
            <person name="Futreal P.A."/>
            <person name="Stratton M.R."/>
        </authorList>
    </citation>
    <scope>VARIANTS [LARGE SCALE ANALYSIS] ILE-140 AND TYR-303</scope>
</reference>
<reference key="53">
    <citation type="journal article" date="2013" name="Am. J. Hum. Genet.">
        <title>ERBB4 mutations that disrupt the neuregulin-ErbB4 pathway cause amyotrophic lateral sclerosis type 19.</title>
        <authorList>
            <person name="Takahashi Y."/>
            <person name="Fukuda Y."/>
            <person name="Yoshimura J."/>
            <person name="Toyoda A."/>
            <person name="Kurppa K."/>
            <person name="Moritoyo H."/>
            <person name="Belzil V.V."/>
            <person name="Dion P.A."/>
            <person name="Higasa K."/>
            <person name="Doi K."/>
            <person name="Ishiura H."/>
            <person name="Mitsui J."/>
            <person name="Date H."/>
            <person name="Ahsan B."/>
            <person name="Matsukawa T."/>
            <person name="Ichikawa Y."/>
            <person name="Moritoyo T."/>
            <person name="Ikoma M."/>
            <person name="Hashimoto T."/>
            <person name="Kimura F."/>
            <person name="Murayama S."/>
            <person name="Onodera O."/>
            <person name="Nishizawa M."/>
            <person name="Yoshida M."/>
            <person name="Atsuta N."/>
            <person name="Sobue G."/>
            <person name="Fifita J.A."/>
            <person name="Williams K.L."/>
            <person name="Blair I.P."/>
            <person name="Nicholson G.A."/>
            <person name="Gonzalez-Perez P."/>
            <person name="Brown R.H. Jr."/>
            <person name="Nomoto M."/>
            <person name="Elenius K."/>
            <person name="Rouleau G.A."/>
            <person name="Fujiyama A."/>
            <person name="Morishita S."/>
            <person name="Goto J."/>
            <person name="Tsuji S."/>
            <person name="Nakamura R."/>
            <person name="Watanabe H."/>
            <person name="Izumi Y."/>
            <person name="Kaji R."/>
            <person name="Morita M."/>
            <person name="Ogaki K."/>
            <person name="Taniguchi A."/>
            <person name="Aiba I."/>
            <person name="Mizoguchi K."/>
            <person name="Okamoto K."/>
            <person name="Hasegawa K."/>
            <person name="Aoki M."/>
            <person name="Kawata A."/>
            <person name="Nakano I."/>
            <person name="Abe K."/>
            <person name="Oda M."/>
            <person name="Konagaya M."/>
            <person name="Imai T."/>
            <person name="Nakagawa M."/>
            <person name="Fujita T."/>
            <person name="Sasaki H."/>
            <person name="Nishizawa M."/>
        </authorList>
    </citation>
    <scope>VARIANTS ALS19 GLN-927 AND TRP-1275</scope>
    <scope>CHARACTERIZATION OF VARIANTS ASL19 GLN-927 AND TRP-1275</scope>
</reference>
<dbReference type="EC" id="2.7.10.1"/>
<dbReference type="EMBL" id="L07868">
    <property type="protein sequence ID" value="AAB59446.1"/>
    <property type="molecule type" value="mRNA"/>
</dbReference>
<dbReference type="EMBL" id="BC112199">
    <property type="protein sequence ID" value="AAI12200.1"/>
    <property type="molecule type" value="mRNA"/>
</dbReference>
<dbReference type="EMBL" id="BC143741">
    <property type="protein sequence ID" value="AAI43742.1"/>
    <property type="molecule type" value="mRNA"/>
</dbReference>
<dbReference type="EMBL" id="BC143747">
    <property type="protein sequence ID" value="AAI43748.1"/>
    <property type="molecule type" value="mRNA"/>
</dbReference>
<dbReference type="EMBL" id="BC143749">
    <property type="protein sequence ID" value="AAI43750.1"/>
    <property type="molecule type" value="mRNA"/>
</dbReference>
<dbReference type="EMBL" id="AB209697">
    <property type="protein sequence ID" value="BAD92934.1"/>
    <property type="molecule type" value="mRNA"/>
</dbReference>
<dbReference type="CCDS" id="CCDS2394.1">
    <molecule id="Q15303-1"/>
</dbReference>
<dbReference type="CCDS" id="CCDS42811.1">
    <molecule id="Q15303-3"/>
</dbReference>
<dbReference type="PIR" id="A47253">
    <property type="entry name" value="A47253"/>
</dbReference>
<dbReference type="RefSeq" id="NP_001036064.1">
    <molecule id="Q15303-3"/>
    <property type="nucleotide sequence ID" value="NM_001042599.1"/>
</dbReference>
<dbReference type="RefSeq" id="NP_005226.1">
    <molecule id="Q15303-1"/>
    <property type="nucleotide sequence ID" value="NM_005235.3"/>
</dbReference>
<dbReference type="RefSeq" id="XP_005246433.1">
    <molecule id="Q15303-2"/>
    <property type="nucleotide sequence ID" value="XM_005246376.4"/>
</dbReference>
<dbReference type="RefSeq" id="XP_005246434.1">
    <molecule id="Q15303-4"/>
    <property type="nucleotide sequence ID" value="XM_005246377.4"/>
</dbReference>
<dbReference type="RefSeq" id="XP_054196998.1">
    <molecule id="Q15303-2"/>
    <property type="nucleotide sequence ID" value="XM_054341023.1"/>
</dbReference>
<dbReference type="RefSeq" id="XP_054196999.1">
    <molecule id="Q15303-4"/>
    <property type="nucleotide sequence ID" value="XM_054341024.1"/>
</dbReference>
<dbReference type="PDB" id="2AHX">
    <property type="method" value="X-ray"/>
    <property type="resolution" value="2.40 A"/>
    <property type="chains" value="A/B=26-641"/>
</dbReference>
<dbReference type="PDB" id="2L2T">
    <property type="method" value="NMR"/>
    <property type="chains" value="A/B=642-685"/>
</dbReference>
<dbReference type="PDB" id="2LCX">
    <property type="method" value="NMR"/>
    <property type="chains" value="A/B=642-685"/>
</dbReference>
<dbReference type="PDB" id="2R4B">
    <property type="method" value="X-ray"/>
    <property type="resolution" value="2.40 A"/>
    <property type="chains" value="A/B=690-999"/>
</dbReference>
<dbReference type="PDB" id="3BBT">
    <property type="method" value="X-ray"/>
    <property type="resolution" value="2.80 A"/>
    <property type="chains" value="B/D=702-1029"/>
</dbReference>
<dbReference type="PDB" id="3BBW">
    <property type="method" value="X-ray"/>
    <property type="resolution" value="4.00 A"/>
    <property type="chains" value="A/B=702-1029"/>
</dbReference>
<dbReference type="PDB" id="3BCE">
    <property type="method" value="X-ray"/>
    <property type="resolution" value="2.50 A"/>
    <property type="chains" value="A/B/C=702-1029"/>
</dbReference>
<dbReference type="PDB" id="3U2P">
    <property type="method" value="X-ray"/>
    <property type="resolution" value="2.57 A"/>
    <property type="chains" value="A=26-522"/>
</dbReference>
<dbReference type="PDB" id="3U7U">
    <property type="method" value="X-ray"/>
    <property type="resolution" value="3.03 A"/>
    <property type="chains" value="A/B/C/D/E/F=26-640"/>
</dbReference>
<dbReference type="PDB" id="3U9U">
    <property type="method" value="X-ray"/>
    <property type="resolution" value="3.42 A"/>
    <property type="chains" value="E/F=26-650"/>
</dbReference>
<dbReference type="PDB" id="8U4I">
    <property type="method" value="EM"/>
    <property type="resolution" value="3.38 A"/>
    <property type="chains" value="A/B=26-635"/>
</dbReference>
<dbReference type="PDB" id="8U4J">
    <property type="method" value="EM"/>
    <property type="resolution" value="3.70 A"/>
    <property type="chains" value="A/B=26-635"/>
</dbReference>
<dbReference type="PDB" id="8U4K">
    <property type="method" value="EM"/>
    <property type="resolution" value="4.27 A"/>
    <property type="chains" value="A=26-634"/>
</dbReference>
<dbReference type="PDB" id="8U4L">
    <property type="method" value="EM"/>
    <property type="resolution" value="3.31 A"/>
    <property type="chains" value="A=26-634"/>
</dbReference>
<dbReference type="PDBsum" id="2AHX"/>
<dbReference type="PDBsum" id="2L2T"/>
<dbReference type="PDBsum" id="2LCX"/>
<dbReference type="PDBsum" id="2R4B"/>
<dbReference type="PDBsum" id="3BBT"/>
<dbReference type="PDBsum" id="3BBW"/>
<dbReference type="PDBsum" id="3BCE"/>
<dbReference type="PDBsum" id="3U2P"/>
<dbReference type="PDBsum" id="3U7U"/>
<dbReference type="PDBsum" id="3U9U"/>
<dbReference type="PDBsum" id="8U4I"/>
<dbReference type="PDBsum" id="8U4J"/>
<dbReference type="PDBsum" id="8U4K"/>
<dbReference type="PDBsum" id="8U4L"/>
<dbReference type="EMDB" id="EMD-41883"/>
<dbReference type="EMDB" id="EMD-41884"/>
<dbReference type="EMDB" id="EMD-41885"/>
<dbReference type="EMDB" id="EMD-41886"/>
<dbReference type="SMR" id="Q15303"/>
<dbReference type="BioGRID" id="108378">
    <property type="interactions" value="174"/>
</dbReference>
<dbReference type="CORUM" id="Q15303"/>
<dbReference type="DIP" id="DIP-29650N"/>
<dbReference type="ELM" id="Q15303"/>
<dbReference type="FunCoup" id="Q15303">
    <property type="interactions" value="1593"/>
</dbReference>
<dbReference type="IntAct" id="Q15303">
    <property type="interactions" value="107"/>
</dbReference>
<dbReference type="MINT" id="Q15303"/>
<dbReference type="STRING" id="9606.ENSP00000342235"/>
<dbReference type="BindingDB" id="Q15303"/>
<dbReference type="ChEMBL" id="CHEMBL3009"/>
<dbReference type="DrugBank" id="DB08916">
    <property type="generic name" value="Afatinib"/>
</dbReference>
<dbReference type="DrugBank" id="DB12267">
    <property type="generic name" value="Brigatinib"/>
</dbReference>
<dbReference type="DrugBank" id="DB05424">
    <property type="generic name" value="Canertinib"/>
</dbReference>
<dbReference type="DrugBank" id="DB12744">
    <property type="generic name" value="CGI-1842"/>
</dbReference>
<dbReference type="DrugBank" id="DB11963">
    <property type="generic name" value="Dacomitinib"/>
</dbReference>
<dbReference type="DrugBank" id="DB12010">
    <property type="generic name" value="Fostamatinib"/>
</dbReference>
<dbReference type="DrugBank" id="DB12325">
    <property type="generic name" value="Idasanutlin"/>
</dbReference>
<dbReference type="DrugBank" id="DB15035">
    <property type="generic name" value="Zanubrutinib"/>
</dbReference>
<dbReference type="DrugCentral" id="Q15303"/>
<dbReference type="GuidetoPHARMACOLOGY" id="1799"/>
<dbReference type="TCDB" id="8.A.23.1.17">
    <property type="family name" value="the basigin (basigin) family"/>
</dbReference>
<dbReference type="GlyCosmos" id="Q15303">
    <property type="glycosylation" value="11 sites, No reported glycans"/>
</dbReference>
<dbReference type="GlyGen" id="Q15303">
    <property type="glycosylation" value="11 sites, 3 N-linked glycans (1 site)"/>
</dbReference>
<dbReference type="iPTMnet" id="Q15303"/>
<dbReference type="PhosphoSitePlus" id="Q15303"/>
<dbReference type="BioMuta" id="ERBB4"/>
<dbReference type="DMDM" id="3913590"/>
<dbReference type="jPOST" id="Q15303"/>
<dbReference type="MassIVE" id="Q15303"/>
<dbReference type="PaxDb" id="9606-ENSP00000342235"/>
<dbReference type="PeptideAtlas" id="Q15303"/>
<dbReference type="ProteomicsDB" id="60520">
    <molecule id="Q15303-1"/>
</dbReference>
<dbReference type="ProteomicsDB" id="60521">
    <molecule id="Q15303-2"/>
</dbReference>
<dbReference type="ProteomicsDB" id="60522">
    <molecule id="Q15303-3"/>
</dbReference>
<dbReference type="ProteomicsDB" id="60523">
    <molecule id="Q15303-4"/>
</dbReference>
<dbReference type="Pumba" id="Q15303"/>
<dbReference type="ABCD" id="Q15303">
    <property type="antibodies" value="1 sequenced antibody"/>
</dbReference>
<dbReference type="Antibodypedia" id="1602">
    <property type="antibodies" value="1462 antibodies from 46 providers"/>
</dbReference>
<dbReference type="DNASU" id="2066"/>
<dbReference type="Ensembl" id="ENST00000260943.11">
    <molecule id="Q15303-4"/>
    <property type="protein sequence ID" value="ENSP00000260943.7"/>
    <property type="gene ID" value="ENSG00000178568.16"/>
</dbReference>
<dbReference type="Ensembl" id="ENST00000342788.9">
    <molecule id="Q15303-1"/>
    <property type="protein sequence ID" value="ENSP00000342235.4"/>
    <property type="gene ID" value="ENSG00000178568.16"/>
</dbReference>
<dbReference type="Ensembl" id="ENST00000436443.5">
    <molecule id="Q15303-3"/>
    <property type="protein sequence ID" value="ENSP00000403204.1"/>
    <property type="gene ID" value="ENSG00000178568.16"/>
</dbReference>
<dbReference type="GeneID" id="2066"/>
<dbReference type="KEGG" id="hsa:2066"/>
<dbReference type="MANE-Select" id="ENST00000342788.9">
    <property type="protein sequence ID" value="ENSP00000342235.4"/>
    <property type="RefSeq nucleotide sequence ID" value="NM_005235.3"/>
    <property type="RefSeq protein sequence ID" value="NP_005226.1"/>
</dbReference>
<dbReference type="UCSC" id="uc002veg.2">
    <molecule id="Q15303-1"/>
    <property type="organism name" value="human"/>
</dbReference>
<dbReference type="AGR" id="HGNC:3432"/>
<dbReference type="CTD" id="2066"/>
<dbReference type="DisGeNET" id="2066"/>
<dbReference type="GeneCards" id="ERBB4"/>
<dbReference type="HGNC" id="HGNC:3432">
    <property type="gene designation" value="ERBB4"/>
</dbReference>
<dbReference type="HPA" id="ENSG00000178568">
    <property type="expression patterns" value="Tissue enhanced (brain, fallopian tube)"/>
</dbReference>
<dbReference type="MalaCards" id="ERBB4"/>
<dbReference type="MIM" id="600543">
    <property type="type" value="gene"/>
</dbReference>
<dbReference type="MIM" id="615515">
    <property type="type" value="phenotype"/>
</dbReference>
<dbReference type="neXtProt" id="NX_Q15303"/>
<dbReference type="OpenTargets" id="ENSG00000178568"/>
<dbReference type="Orphanet" id="803">
    <property type="disease" value="Amyotrophic lateral sclerosis"/>
</dbReference>
<dbReference type="Orphanet" id="178469">
    <property type="disease" value="Autosomal dominant non-syndromic intellectual disability"/>
</dbReference>
<dbReference type="PharmGKB" id="PA27847"/>
<dbReference type="VEuPathDB" id="HostDB:ENSG00000178568"/>
<dbReference type="eggNOG" id="KOG1025">
    <property type="taxonomic scope" value="Eukaryota"/>
</dbReference>
<dbReference type="GeneTree" id="ENSGT00940000154695"/>
<dbReference type="InParanoid" id="Q15303"/>
<dbReference type="OMA" id="VCHSECL"/>
<dbReference type="OrthoDB" id="6219513at2759"/>
<dbReference type="PAN-GO" id="Q15303">
    <property type="GO annotations" value="9 GO annotations based on evolutionary models"/>
</dbReference>
<dbReference type="PhylomeDB" id="Q15303"/>
<dbReference type="TreeFam" id="TF106002"/>
<dbReference type="BRENDA" id="2.7.10.1">
    <property type="organism ID" value="2681"/>
</dbReference>
<dbReference type="PathwayCommons" id="Q15303"/>
<dbReference type="Reactome" id="R-HSA-1227986">
    <property type="pathway name" value="Signaling by ERBB2"/>
</dbReference>
<dbReference type="Reactome" id="R-HSA-1236394">
    <property type="pathway name" value="Signaling by ERBB4"/>
</dbReference>
<dbReference type="Reactome" id="R-HSA-1250196">
    <property type="pathway name" value="SHC1 events in ERBB2 signaling"/>
</dbReference>
<dbReference type="Reactome" id="R-HSA-1250342">
    <property type="pathway name" value="PI3K events in ERBB4 signaling"/>
</dbReference>
<dbReference type="Reactome" id="R-HSA-1250347">
    <property type="pathway name" value="SHC1 events in ERBB4 signaling"/>
</dbReference>
<dbReference type="Reactome" id="R-HSA-1251985">
    <property type="pathway name" value="Nuclear signaling by ERBB4"/>
</dbReference>
<dbReference type="Reactome" id="R-HSA-1253288">
    <property type="pathway name" value="Downregulation of ERBB4 signaling"/>
</dbReference>
<dbReference type="Reactome" id="R-HSA-1257604">
    <property type="pathway name" value="PIP3 activates AKT signaling"/>
</dbReference>
<dbReference type="Reactome" id="R-HSA-1963640">
    <property type="pathway name" value="GRB2 events in ERBB2 signaling"/>
</dbReference>
<dbReference type="Reactome" id="R-HSA-1963642">
    <property type="pathway name" value="PI3K events in ERBB2 signaling"/>
</dbReference>
<dbReference type="Reactome" id="R-HSA-2219530">
    <property type="pathway name" value="Constitutive Signaling by Aberrant PI3K in Cancer"/>
</dbReference>
<dbReference type="Reactome" id="R-HSA-5673001">
    <property type="pathway name" value="RAF/MAP kinase cascade"/>
</dbReference>
<dbReference type="Reactome" id="R-HSA-6785631">
    <property type="pathway name" value="ERBB2 Regulates Cell Motility"/>
</dbReference>
<dbReference type="Reactome" id="R-HSA-6811558">
    <property type="pathway name" value="PI5P, PP2A and IER3 Regulate PI3K/AKT Signaling"/>
</dbReference>
<dbReference type="Reactome" id="R-HSA-8847993">
    <property type="pathway name" value="ERBB2 Activates PTK6 Signaling"/>
</dbReference>
<dbReference type="Reactome" id="R-HSA-8863795">
    <property type="pathway name" value="Downregulation of ERBB2 signaling"/>
</dbReference>
<dbReference type="Reactome" id="R-HSA-9018519">
    <property type="pathway name" value="Estrogen-dependent gene expression"/>
</dbReference>
<dbReference type="Reactome" id="R-HSA-9620244">
    <property type="pathway name" value="Long-term potentiation"/>
</dbReference>
<dbReference type="Reactome" id="R-HSA-9664565">
    <property type="pathway name" value="Signaling by ERBB2 KD Mutants"/>
</dbReference>
<dbReference type="Reactome" id="R-HSA-9665686">
    <property type="pathway name" value="Signaling by ERBB2 TMD/JMD mutants"/>
</dbReference>
<dbReference type="SignaLink" id="Q15303"/>
<dbReference type="SIGNOR" id="Q15303"/>
<dbReference type="BioGRID-ORCS" id="2066">
    <property type="hits" value="33 hits in 1186 CRISPR screens"/>
</dbReference>
<dbReference type="ChiTaRS" id="ERBB4">
    <property type="organism name" value="human"/>
</dbReference>
<dbReference type="EvolutionaryTrace" id="Q15303"/>
<dbReference type="GeneWiki" id="ERBB4"/>
<dbReference type="GenomeRNAi" id="2066"/>
<dbReference type="Pharos" id="Q15303">
    <property type="development level" value="Tclin"/>
</dbReference>
<dbReference type="PRO" id="PR:Q15303"/>
<dbReference type="Proteomes" id="UP000005640">
    <property type="component" value="Chromosome 2"/>
</dbReference>
<dbReference type="RNAct" id="Q15303">
    <property type="molecule type" value="protein"/>
</dbReference>
<dbReference type="Bgee" id="ENSG00000178568">
    <property type="expression patterns" value="Expressed in endothelial cell and 154 other cell types or tissues"/>
</dbReference>
<dbReference type="ExpressionAtlas" id="Q15303">
    <property type="expression patterns" value="baseline and differential"/>
</dbReference>
<dbReference type="GO" id="GO:0009925">
    <property type="term" value="C:basal plasma membrane"/>
    <property type="evidence" value="ECO:0000318"/>
    <property type="project" value="GO_Central"/>
</dbReference>
<dbReference type="GO" id="GO:0016323">
    <property type="term" value="C:basolateral plasma membrane"/>
    <property type="evidence" value="ECO:0000314"/>
    <property type="project" value="BHF-UCL"/>
</dbReference>
<dbReference type="GO" id="GO:0005829">
    <property type="term" value="C:cytosol"/>
    <property type="evidence" value="ECO:0000304"/>
    <property type="project" value="Reactome"/>
</dbReference>
<dbReference type="GO" id="GO:0005576">
    <property type="term" value="C:extracellular region"/>
    <property type="evidence" value="ECO:0000304"/>
    <property type="project" value="Reactome"/>
</dbReference>
<dbReference type="GO" id="GO:0098982">
    <property type="term" value="C:GABA-ergic synapse"/>
    <property type="evidence" value="ECO:0007669"/>
    <property type="project" value="Ensembl"/>
</dbReference>
<dbReference type="GO" id="GO:0098978">
    <property type="term" value="C:glutamatergic synapse"/>
    <property type="evidence" value="ECO:0007669"/>
    <property type="project" value="Ensembl"/>
</dbReference>
<dbReference type="GO" id="GO:0005759">
    <property type="term" value="C:mitochondrial matrix"/>
    <property type="evidence" value="ECO:0000304"/>
    <property type="project" value="Reactome"/>
</dbReference>
<dbReference type="GO" id="GO:0005739">
    <property type="term" value="C:mitochondrion"/>
    <property type="evidence" value="ECO:0000314"/>
    <property type="project" value="UniProtKB"/>
</dbReference>
<dbReference type="GO" id="GO:0031594">
    <property type="term" value="C:neuromuscular junction"/>
    <property type="evidence" value="ECO:0007669"/>
    <property type="project" value="Ensembl"/>
</dbReference>
<dbReference type="GO" id="GO:0005654">
    <property type="term" value="C:nucleoplasm"/>
    <property type="evidence" value="ECO:0000304"/>
    <property type="project" value="Reactome"/>
</dbReference>
<dbReference type="GO" id="GO:0005634">
    <property type="term" value="C:nucleus"/>
    <property type="evidence" value="ECO:0000314"/>
    <property type="project" value="UniProtKB"/>
</dbReference>
<dbReference type="GO" id="GO:0005886">
    <property type="term" value="C:plasma membrane"/>
    <property type="evidence" value="ECO:0000314"/>
    <property type="project" value="MGI"/>
</dbReference>
<dbReference type="GO" id="GO:0098839">
    <property type="term" value="C:postsynaptic density membrane"/>
    <property type="evidence" value="ECO:0007669"/>
    <property type="project" value="Ensembl"/>
</dbReference>
<dbReference type="GO" id="GO:0045211">
    <property type="term" value="C:postsynaptic membrane"/>
    <property type="evidence" value="ECO:0000250"/>
    <property type="project" value="UniProtKB"/>
</dbReference>
<dbReference type="GO" id="GO:0042734">
    <property type="term" value="C:presynaptic membrane"/>
    <property type="evidence" value="ECO:0007669"/>
    <property type="project" value="Ensembl"/>
</dbReference>
<dbReference type="GO" id="GO:0043235">
    <property type="term" value="C:receptor complex"/>
    <property type="evidence" value="ECO:0000314"/>
    <property type="project" value="MGI"/>
</dbReference>
<dbReference type="GO" id="GO:0005524">
    <property type="term" value="F:ATP binding"/>
    <property type="evidence" value="ECO:0007669"/>
    <property type="project" value="UniProtKB-KW"/>
</dbReference>
<dbReference type="GO" id="GO:0005006">
    <property type="term" value="F:epidermal growth factor receptor activity"/>
    <property type="evidence" value="ECO:0007669"/>
    <property type="project" value="Ensembl"/>
</dbReference>
<dbReference type="GO" id="GO:0005154">
    <property type="term" value="F:epidermal growth factor receptor binding"/>
    <property type="evidence" value="ECO:0000353"/>
    <property type="project" value="UniProtKB"/>
</dbReference>
<dbReference type="GO" id="GO:0050811">
    <property type="term" value="F:GABA receptor binding"/>
    <property type="evidence" value="ECO:0007669"/>
    <property type="project" value="Ensembl"/>
</dbReference>
<dbReference type="GO" id="GO:0038131">
    <property type="term" value="F:neuregulin receptor activity"/>
    <property type="evidence" value="ECO:0000314"/>
    <property type="project" value="MGI"/>
</dbReference>
<dbReference type="GO" id="GO:0042803">
    <property type="term" value="F:protein homodimerization activity"/>
    <property type="evidence" value="ECO:0000353"/>
    <property type="project" value="UniProtKB"/>
</dbReference>
<dbReference type="GO" id="GO:0004713">
    <property type="term" value="F:protein tyrosine kinase activity"/>
    <property type="evidence" value="ECO:0000314"/>
    <property type="project" value="UniProtKB"/>
</dbReference>
<dbReference type="GO" id="GO:0000976">
    <property type="term" value="F:transcription cis-regulatory region binding"/>
    <property type="evidence" value="ECO:0000315"/>
    <property type="project" value="UniProtKB"/>
</dbReference>
<dbReference type="GO" id="GO:0004714">
    <property type="term" value="F:transmembrane receptor protein tyrosine kinase activity"/>
    <property type="evidence" value="ECO:0000314"/>
    <property type="project" value="UniProtKB"/>
</dbReference>
<dbReference type="GO" id="GO:0061026">
    <property type="term" value="P:cardiac muscle tissue regeneration"/>
    <property type="evidence" value="ECO:0000250"/>
    <property type="project" value="UniProtKB"/>
</dbReference>
<dbReference type="GO" id="GO:0045165">
    <property type="term" value="P:cell fate commitment"/>
    <property type="evidence" value="ECO:0007669"/>
    <property type="project" value="Ensembl"/>
</dbReference>
<dbReference type="GO" id="GO:0016477">
    <property type="term" value="P:cell migration"/>
    <property type="evidence" value="ECO:0000314"/>
    <property type="project" value="UniProtKB"/>
</dbReference>
<dbReference type="GO" id="GO:0007169">
    <property type="term" value="P:cell surface receptor protein tyrosine kinase signaling pathway"/>
    <property type="evidence" value="ECO:0000314"/>
    <property type="project" value="UniProtKB"/>
</dbReference>
<dbReference type="GO" id="GO:0007259">
    <property type="term" value="P:cell surface receptor signaling pathway via JAK-STAT"/>
    <property type="evidence" value="ECO:0007669"/>
    <property type="project" value="Ensembl"/>
</dbReference>
<dbReference type="GO" id="GO:0071364">
    <property type="term" value="P:cellular response to epidermal growth factor stimulus"/>
    <property type="evidence" value="ECO:0007669"/>
    <property type="project" value="Ensembl"/>
</dbReference>
<dbReference type="GO" id="GO:0021551">
    <property type="term" value="P:central nervous system morphogenesis"/>
    <property type="evidence" value="ECO:0000250"/>
    <property type="project" value="UniProtKB"/>
</dbReference>
<dbReference type="GO" id="GO:0009880">
    <property type="term" value="P:embryonic pattern specification"/>
    <property type="evidence" value="ECO:0000250"/>
    <property type="project" value="UniProtKB"/>
</dbReference>
<dbReference type="GO" id="GO:0007173">
    <property type="term" value="P:epidermal growth factor receptor signaling pathway"/>
    <property type="evidence" value="ECO:0000318"/>
    <property type="project" value="GO_Central"/>
</dbReference>
<dbReference type="GO" id="GO:0038135">
    <property type="term" value="P:ERBB2-ERBB4 signaling pathway"/>
    <property type="evidence" value="ECO:0007669"/>
    <property type="project" value="Ensembl"/>
</dbReference>
<dbReference type="GO" id="GO:0038130">
    <property type="term" value="P:ERBB4 signaling pathway"/>
    <property type="evidence" value="ECO:0000314"/>
    <property type="project" value="MGI"/>
</dbReference>
<dbReference type="GO" id="GO:0038138">
    <property type="term" value="P:ERBB4-ERBB4 signaling pathway"/>
    <property type="evidence" value="ECO:0000314"/>
    <property type="project" value="MGI"/>
</dbReference>
<dbReference type="GO" id="GO:0072046">
    <property type="term" value="P:establishment of planar polarity involved in nephron morphogenesis"/>
    <property type="evidence" value="ECO:0007669"/>
    <property type="project" value="Ensembl"/>
</dbReference>
<dbReference type="GO" id="GO:0007507">
    <property type="term" value="P:heart development"/>
    <property type="evidence" value="ECO:0000250"/>
    <property type="project" value="UniProtKB"/>
</dbReference>
<dbReference type="GO" id="GO:0007595">
    <property type="term" value="P:lactation"/>
    <property type="evidence" value="ECO:0000315"/>
    <property type="project" value="UniProtKB"/>
</dbReference>
<dbReference type="GO" id="GO:0060749">
    <property type="term" value="P:mammary gland alveolus development"/>
    <property type="evidence" value="ECO:0000250"/>
    <property type="project" value="UniProtKB"/>
</dbReference>
<dbReference type="GO" id="GO:0060644">
    <property type="term" value="P:mammary gland epithelial cell differentiation"/>
    <property type="evidence" value="ECO:0000250"/>
    <property type="project" value="UniProtKB"/>
</dbReference>
<dbReference type="GO" id="GO:0043653">
    <property type="term" value="P:mitochondrial fragmentation involved in apoptotic process"/>
    <property type="evidence" value="ECO:0000315"/>
    <property type="project" value="UniProtKB"/>
</dbReference>
<dbReference type="GO" id="GO:0043066">
    <property type="term" value="P:negative regulation of apoptotic process"/>
    <property type="evidence" value="ECO:0000315"/>
    <property type="project" value="UniProtKB"/>
</dbReference>
<dbReference type="GO" id="GO:0008285">
    <property type="term" value="P:negative regulation of cell population proliferation"/>
    <property type="evidence" value="ECO:0000315"/>
    <property type="project" value="UniProtKB"/>
</dbReference>
<dbReference type="GO" id="GO:2001223">
    <property type="term" value="P:negative regulation of neuron migration"/>
    <property type="evidence" value="ECO:0007669"/>
    <property type="project" value="Ensembl"/>
</dbReference>
<dbReference type="GO" id="GO:0007399">
    <property type="term" value="P:nervous system development"/>
    <property type="evidence" value="ECO:0000250"/>
    <property type="project" value="UniProtKB"/>
</dbReference>
<dbReference type="GO" id="GO:0001755">
    <property type="term" value="P:neural crest cell migration"/>
    <property type="evidence" value="ECO:0000250"/>
    <property type="project" value="UniProtKB"/>
</dbReference>
<dbReference type="GO" id="GO:0030182">
    <property type="term" value="P:neuron differentiation"/>
    <property type="evidence" value="ECO:0000318"/>
    <property type="project" value="GO_Central"/>
</dbReference>
<dbReference type="GO" id="GO:0099645">
    <property type="term" value="P:neurotransmitter receptor localization to postsynaptic specialization membrane"/>
    <property type="evidence" value="ECO:0007669"/>
    <property type="project" value="Ensembl"/>
</dbReference>
<dbReference type="GO" id="GO:0021889">
    <property type="term" value="P:olfactory bulb interneuron differentiation"/>
    <property type="evidence" value="ECO:0000250"/>
    <property type="project" value="UniProtKB"/>
</dbReference>
<dbReference type="GO" id="GO:0018108">
    <property type="term" value="P:peptidyl-tyrosine phosphorylation"/>
    <property type="evidence" value="ECO:0000314"/>
    <property type="project" value="UniProtKB"/>
</dbReference>
<dbReference type="GO" id="GO:0060045">
    <property type="term" value="P:positive regulation of cardiac muscle cell proliferation"/>
    <property type="evidence" value="ECO:0000250"/>
    <property type="project" value="UniProtKB"/>
</dbReference>
<dbReference type="GO" id="GO:0008284">
    <property type="term" value="P:positive regulation of cell population proliferation"/>
    <property type="evidence" value="ECO:0000315"/>
    <property type="project" value="UniProtKB"/>
</dbReference>
<dbReference type="GO" id="GO:0045893">
    <property type="term" value="P:positive regulation of DNA-templated transcription"/>
    <property type="evidence" value="ECO:0000315"/>
    <property type="project" value="UniProtKB"/>
</dbReference>
<dbReference type="GO" id="GO:0050679">
    <property type="term" value="P:positive regulation of epithelial cell proliferation"/>
    <property type="evidence" value="ECO:0000318"/>
    <property type="project" value="GO_Central"/>
</dbReference>
<dbReference type="GO" id="GO:0070374">
    <property type="term" value="P:positive regulation of ERK1 and ERK2 cascade"/>
    <property type="evidence" value="ECO:0000315"/>
    <property type="project" value="UniProtKB"/>
</dbReference>
<dbReference type="GO" id="GO:0043410">
    <property type="term" value="P:positive regulation of MAPK cascade"/>
    <property type="evidence" value="ECO:0000318"/>
    <property type="project" value="GO_Central"/>
</dbReference>
<dbReference type="GO" id="GO:0051897">
    <property type="term" value="P:positive regulation of phosphatidylinositol 3-kinase/protein kinase B signal transduction"/>
    <property type="evidence" value="ECO:0007669"/>
    <property type="project" value="Ensembl"/>
</dbReference>
<dbReference type="GO" id="GO:2000010">
    <property type="term" value="P:positive regulation of protein localization to cell surface"/>
    <property type="evidence" value="ECO:0007669"/>
    <property type="project" value="Ensembl"/>
</dbReference>
<dbReference type="GO" id="GO:0001934">
    <property type="term" value="P:positive regulation of protein phosphorylation"/>
    <property type="evidence" value="ECO:0000304"/>
    <property type="project" value="UniProtKB"/>
</dbReference>
<dbReference type="GO" id="GO:0046427">
    <property type="term" value="P:positive regulation of receptor signaling pathway via JAK-STAT"/>
    <property type="evidence" value="ECO:0000315"/>
    <property type="project" value="UniProtKB"/>
</dbReference>
<dbReference type="GO" id="GO:0042531">
    <property type="term" value="P:positive regulation of tyrosine phosphorylation of STAT protein"/>
    <property type="evidence" value="ECO:0000315"/>
    <property type="project" value="UniProtKB"/>
</dbReference>
<dbReference type="GO" id="GO:0046777">
    <property type="term" value="P:protein autophosphorylation"/>
    <property type="evidence" value="ECO:0000314"/>
    <property type="project" value="UniProtKB"/>
</dbReference>
<dbReference type="GO" id="GO:0030334">
    <property type="term" value="P:regulation of cell migration"/>
    <property type="evidence" value="ECO:0000250"/>
    <property type="project" value="UniProtKB"/>
</dbReference>
<dbReference type="GO" id="GO:0007165">
    <property type="term" value="P:signal transduction"/>
    <property type="evidence" value="ECO:0000314"/>
    <property type="project" value="UniProtKB"/>
</dbReference>
<dbReference type="GO" id="GO:0007416">
    <property type="term" value="P:synapse assembly"/>
    <property type="evidence" value="ECO:0007669"/>
    <property type="project" value="Ensembl"/>
</dbReference>
<dbReference type="CDD" id="cd00064">
    <property type="entry name" value="FU"/>
    <property type="match status" value="3"/>
</dbReference>
<dbReference type="CDD" id="cd05110">
    <property type="entry name" value="PTKc_HER4"/>
    <property type="match status" value="1"/>
</dbReference>
<dbReference type="CDD" id="cd12092">
    <property type="entry name" value="TM_ErbB4"/>
    <property type="match status" value="1"/>
</dbReference>
<dbReference type="FunFam" id="2.10.220.10:FF:000001">
    <property type="entry name" value="Receptor protein-tyrosine kinase"/>
    <property type="match status" value="1"/>
</dbReference>
<dbReference type="FunFam" id="2.10.220.10:FF:000004">
    <property type="entry name" value="Receptor protein-tyrosine kinase"/>
    <property type="match status" value="1"/>
</dbReference>
<dbReference type="FunFam" id="3.30.200.20:FF:000044">
    <property type="entry name" value="Receptor protein-tyrosine kinase"/>
    <property type="match status" value="1"/>
</dbReference>
<dbReference type="FunFam" id="3.80.20.20:FF:000003">
    <property type="entry name" value="Receptor protein-tyrosine kinase"/>
    <property type="match status" value="1"/>
</dbReference>
<dbReference type="FunFam" id="3.80.20.20:FF:000004">
    <property type="entry name" value="Receptor protein-tyrosine kinase"/>
    <property type="match status" value="1"/>
</dbReference>
<dbReference type="FunFam" id="1.10.510.10:FF:002828">
    <property type="entry name" value="Receptor tyrosine-protein kinase erbB-2"/>
    <property type="match status" value="1"/>
</dbReference>
<dbReference type="Gene3D" id="6.10.250.880">
    <property type="match status" value="1"/>
</dbReference>
<dbReference type="Gene3D" id="2.10.220.10">
    <property type="entry name" value="Hormone Receptor, Insulin-like Growth Factor Receptor 1, Chain A, domain 2"/>
    <property type="match status" value="3"/>
</dbReference>
<dbReference type="Gene3D" id="3.30.200.20">
    <property type="entry name" value="Phosphorylase Kinase, domain 1"/>
    <property type="match status" value="1"/>
</dbReference>
<dbReference type="Gene3D" id="3.80.20.20">
    <property type="entry name" value="Receptor L-domain"/>
    <property type="match status" value="2"/>
</dbReference>
<dbReference type="Gene3D" id="1.10.510.10">
    <property type="entry name" value="Transferase(Phosphotransferase) domain 1"/>
    <property type="match status" value="1"/>
</dbReference>
<dbReference type="InterPro" id="IPR006211">
    <property type="entry name" value="Furin-like_Cys-rich_dom"/>
</dbReference>
<dbReference type="InterPro" id="IPR006212">
    <property type="entry name" value="Furin_repeat"/>
</dbReference>
<dbReference type="InterPro" id="IPR032778">
    <property type="entry name" value="GF_recep_IV"/>
</dbReference>
<dbReference type="InterPro" id="IPR009030">
    <property type="entry name" value="Growth_fac_rcpt_cys_sf"/>
</dbReference>
<dbReference type="InterPro" id="IPR011009">
    <property type="entry name" value="Kinase-like_dom_sf"/>
</dbReference>
<dbReference type="InterPro" id="IPR000719">
    <property type="entry name" value="Prot_kinase_dom"/>
</dbReference>
<dbReference type="InterPro" id="IPR017441">
    <property type="entry name" value="Protein_kinase_ATP_BS"/>
</dbReference>
<dbReference type="InterPro" id="IPR000494">
    <property type="entry name" value="Rcpt_L-dom"/>
</dbReference>
<dbReference type="InterPro" id="IPR036941">
    <property type="entry name" value="Rcpt_L-dom_sf"/>
</dbReference>
<dbReference type="InterPro" id="IPR050122">
    <property type="entry name" value="RTK"/>
</dbReference>
<dbReference type="InterPro" id="IPR001245">
    <property type="entry name" value="Ser-Thr/Tyr_kinase_cat_dom"/>
</dbReference>
<dbReference type="InterPro" id="IPR049328">
    <property type="entry name" value="TM_ErbB1"/>
</dbReference>
<dbReference type="InterPro" id="IPR008266">
    <property type="entry name" value="Tyr_kinase_AS"/>
</dbReference>
<dbReference type="InterPro" id="IPR020635">
    <property type="entry name" value="Tyr_kinase_cat_dom"/>
</dbReference>
<dbReference type="InterPro" id="IPR016245">
    <property type="entry name" value="Tyr_kinase_EGF/ERB/XmrK_rcpt"/>
</dbReference>
<dbReference type="PANTHER" id="PTHR24416:SF90">
    <property type="entry name" value="RECEPTOR TYROSINE-PROTEIN KINASE ERBB-4"/>
    <property type="match status" value="1"/>
</dbReference>
<dbReference type="PANTHER" id="PTHR24416">
    <property type="entry name" value="TYROSINE-PROTEIN KINASE RECEPTOR"/>
    <property type="match status" value="1"/>
</dbReference>
<dbReference type="Pfam" id="PF00757">
    <property type="entry name" value="Furin-like"/>
    <property type="match status" value="1"/>
</dbReference>
<dbReference type="Pfam" id="PF14843">
    <property type="entry name" value="GF_recep_IV"/>
    <property type="match status" value="1"/>
</dbReference>
<dbReference type="Pfam" id="PF07714">
    <property type="entry name" value="PK_Tyr_Ser-Thr"/>
    <property type="match status" value="1"/>
</dbReference>
<dbReference type="Pfam" id="PF01030">
    <property type="entry name" value="Recep_L_domain"/>
    <property type="match status" value="2"/>
</dbReference>
<dbReference type="Pfam" id="PF21314">
    <property type="entry name" value="TM_ErbB1"/>
    <property type="match status" value="1"/>
</dbReference>
<dbReference type="PIRSF" id="PIRSF000619">
    <property type="entry name" value="TyrPK_EGF-R"/>
    <property type="match status" value="1"/>
</dbReference>
<dbReference type="PRINTS" id="PR00109">
    <property type="entry name" value="TYRKINASE"/>
</dbReference>
<dbReference type="SMART" id="SM00261">
    <property type="entry name" value="FU"/>
    <property type="match status" value="5"/>
</dbReference>
<dbReference type="SMART" id="SM00219">
    <property type="entry name" value="TyrKc"/>
    <property type="match status" value="1"/>
</dbReference>
<dbReference type="SUPFAM" id="SSF57184">
    <property type="entry name" value="Growth factor receptor domain"/>
    <property type="match status" value="2"/>
</dbReference>
<dbReference type="SUPFAM" id="SSF52058">
    <property type="entry name" value="L domain-like"/>
    <property type="match status" value="2"/>
</dbReference>
<dbReference type="SUPFAM" id="SSF56112">
    <property type="entry name" value="Protein kinase-like (PK-like)"/>
    <property type="match status" value="1"/>
</dbReference>
<dbReference type="PROSITE" id="PS00107">
    <property type="entry name" value="PROTEIN_KINASE_ATP"/>
    <property type="match status" value="1"/>
</dbReference>
<dbReference type="PROSITE" id="PS50011">
    <property type="entry name" value="PROTEIN_KINASE_DOM"/>
    <property type="match status" value="1"/>
</dbReference>
<dbReference type="PROSITE" id="PS00109">
    <property type="entry name" value="PROTEIN_KINASE_TYR"/>
    <property type="match status" value="1"/>
</dbReference>
<accession>Q15303</accession>
<accession>B7ZLD7</accession>
<accession>B7ZLE2</accession>
<accession>B7ZLE3</accession>
<accession>Q2M1W1</accession>
<accession>Q59EW4</accession>
<comment type="function">
    <text evidence="6 7 8 9 12 13 14 15 17 18 21 22 24 28 29 33 36 41 43 44 45 47">Tyrosine-protein kinase that plays an essential role as cell surface receptor for neuregulins and EGF family members and regulates development of the heart, the central nervous system and the mammary gland, gene transcription, cell proliferation, differentiation, migration and apoptosis. Required for normal cardiac muscle differentiation during embryonic development, and for postnatal cardiomyocyte proliferation. Required for normal development of the embryonic central nervous system, especially for normal neural crest cell migration and normal axon guidance. Required for mammary gland differentiation, induction of milk proteins and lactation. Acts as cell-surface receptor for the neuregulins NRG1, NRG2, NRG3 and NRG4 and the EGF family members BTC, EREG and HBEGF. Ligand binding triggers receptor dimerization and autophosphorylation at specific tyrosine residues that then serve as binding sites for scaffold proteins and effectors. Ligand specificity and signaling is modulated by alternative splicing, proteolytic processing, and by the formation of heterodimers with other ERBB family members, thereby creating multiple combinations of intracellular phosphotyrosines that trigger ligand- and context-specific cellular responses. Mediates phosphorylation of SHC1 and activation of the MAP kinases MAPK1/ERK2 and MAPK3/ERK1. Isoform JM-A CYT-1 and isoform JM-B CYT-1 phosphorylate PIK3R1, leading to the activation of phosphatidylinositol 3-kinase and AKT1 and protect cells against apoptosis. Isoform JM-A CYT-1 and isoform JM-B CYT-1 mediate reorganization of the actin cytoskeleton and promote cell migration in response to NRG1. Isoform JM-A CYT-2 and isoform JM-B CYT-2 lack the phosphotyrosine that mediates interaction with PIK3R1, and hence do not phosphorylate PIK3R1, do not protect cells against apoptosis, and do not promote reorganization of the actin cytoskeleton and cell migration. Proteolytic processing of isoform JM-A CYT-1 and isoform JM-A CYT-2 gives rise to the corresponding soluble intracellular domains (4ICD) that translocate to the nucleus, promote nuclear import of STAT5A, activation of STAT5A, mammary epithelium differentiation, cell proliferation and activation of gene expression. The ERBB4 soluble intracellular domains (4ICD) colocalize with STAT5A at the CSN2 promoter to regulate transcription of milk proteins during lactation. The ERBB4 soluble intracellular domains can also translocate to mitochondria and promote apoptosis.</text>
</comment>
<comment type="catalytic activity">
    <reaction evidence="4 30 31 33 43">
        <text>L-tyrosyl-[protein] + ATP = O-phospho-L-tyrosyl-[protein] + ADP + H(+)</text>
        <dbReference type="Rhea" id="RHEA:10596"/>
        <dbReference type="Rhea" id="RHEA-COMP:10136"/>
        <dbReference type="Rhea" id="RHEA-COMP:20101"/>
        <dbReference type="ChEBI" id="CHEBI:15378"/>
        <dbReference type="ChEBI" id="CHEBI:30616"/>
        <dbReference type="ChEBI" id="CHEBI:46858"/>
        <dbReference type="ChEBI" id="CHEBI:61978"/>
        <dbReference type="ChEBI" id="CHEBI:456216"/>
        <dbReference type="EC" id="2.7.10.1"/>
    </reaction>
</comment>
<comment type="activity regulation">
    <text evidence="13 31 33 37 43">Binding of a cognate ligand leads to dimerization and activation by autophosphorylation on tyrosine residues. In vitro kinase activity is increased by Mg(2+). Inhibited by PD153035, lapatinib, gefitinib (iressa, ZD1839), AG1478 and BIBX1382BS.</text>
</comment>
<comment type="subunit">
    <text evidence="1 6 7 8 10 12 15 16 17 19 22 23 24 25 30 31 32 33 34 35 36 39 40 42 43 44 45 46 48 49">Monomer in the absence of bound ligand. Homodimer or heterodimer with another ERBB family member upon ligand binding, thus forming heterotetramers. Interacts with EGFR and ERBB2. Interacts with CBFA2T3 (By similarity). Interacts with DLG2 (via its PDZ domain), DLG3 (via its PDZ domain), DLG4 (via its PDZ domain) and SNTB2 (via its PDZ domain). Interacts with MUC1. Interacts (via its PPxy motifs) with WWOX. Interacts (via the PPxY motif 3 of isoform JM-A CYT-2) with YAP1 (via the WW domain 1 of isoform 1). Interacts (isoform JM-A CYT-1 and isoform JM-B CYT-1) with WWP1. Interacts (via its intracellular domain) with TRIM28. Interacts (via the intracellular domains of both CYT-1 and CYT-2 isoforms) with KAP1; the interaction does not phosphorylate KAP1 but represses ERBB4-mediated transcriptional activity. Interacts with PRPU, DDX23, MATR3, RBM15, ILF3, KAP1, U5S1, U2SURP, ITCH, HNRNPU, AP2A1, NULC, LEO1, WWP2, IGHG1, HXK1, GRB7 and SRRT. Interacts (phosphorylated isoform JM-A CYT-1 and isoform JM-B CYT-1) with PIK3R1. Interacts with SHC1. Interacts with GRB2. Interacts (soluble intracellular domain) with STAT5A. Interacts (soluble intracellular domain) with BCL2. Interacts (phosphorylated) with STAT1.</text>
</comment>
<comment type="interaction">
    <interactant intactId="EBI-80371">
        <id>Q15303</id>
    </interactant>
    <interactant intactId="EBI-1102694">
        <id>P42684</id>
        <label>ABL2</label>
    </interactant>
    <organismsDiffer>false</organismsDiffer>
    <experiments>4</experiments>
</comment>
<comment type="interaction">
    <interactant intactId="EBI-80371">
        <id>Q15303</id>
    </interactant>
    <interactant intactId="EBI-358049">
        <id>Q13895</id>
        <label>BYSL</label>
    </interactant>
    <organismsDiffer>false</organismsDiffer>
    <experiments>3</experiments>
</comment>
<comment type="interaction">
    <interactant intactId="EBI-80371">
        <id>Q15303</id>
    </interactant>
    <interactant intactId="EBI-80389">
        <id>P78352</id>
        <label>DLG4</label>
    </interactant>
    <organismsDiffer>false</organismsDiffer>
    <experiments>6</experiments>
</comment>
<comment type="interaction">
    <interactant intactId="EBI-80371">
        <id>Q15303</id>
    </interactant>
    <interactant intactId="EBI-297353">
        <id>P00533</id>
        <label>EGFR</label>
    </interactant>
    <organismsDiffer>false</organismsDiffer>
    <experiments>3</experiments>
</comment>
<comment type="interaction">
    <interactant intactId="EBI-80371">
        <id>Q15303</id>
    </interactant>
    <interactant intactId="EBI-641062">
        <id>P04626</id>
        <label>ERBB2</label>
    </interactant>
    <organismsDiffer>false</organismsDiffer>
    <experiments>5</experiments>
</comment>
<comment type="interaction">
    <interactant intactId="EBI-80371">
        <id>Q15303</id>
    </interactant>
    <interactant intactId="EBI-720706">
        <id>P21860</id>
        <label>ERBB3</label>
    </interactant>
    <organismsDiffer>false</organismsDiffer>
    <experiments>4</experiments>
</comment>
<comment type="interaction">
    <interactant intactId="EBI-80371">
        <id>Q15303</id>
    </interactant>
    <interactant intactId="EBI-7211558">
        <id>Q99075</id>
        <label>HBEGF</label>
    </interactant>
    <organismsDiffer>false</organismsDiffer>
    <experiments>2</experiments>
</comment>
<comment type="interaction">
    <interactant intactId="EBI-80371">
        <id>Q15303</id>
    </interactant>
    <interactant intactId="EBI-352572">
        <id>P08238</id>
        <label>HSP90AB1</label>
    </interactant>
    <organismsDiffer>false</organismsDiffer>
    <experiments>2</experiments>
</comment>
<comment type="interaction">
    <interactant intactId="EBI-80371">
        <id>Q15303</id>
    </interactant>
    <interactant intactId="EBI-6672198">
        <id>Q96J02-2</id>
        <label>ITCH</label>
    </interactant>
    <organismsDiffer>false</organismsDiffer>
    <experiments>3</experiments>
</comment>
<comment type="interaction">
    <interactant intactId="EBI-80371">
        <id>Q15303</id>
    </interactant>
    <interactant intactId="EBI-2865191">
        <id>Q96JA1</id>
        <label>LRIG1</label>
    </interactant>
    <organismsDiffer>false</organismsDiffer>
    <experiments>3</experiments>
</comment>
<comment type="interaction">
    <interactant intactId="EBI-80371">
        <id>Q15303</id>
    </interactant>
    <interactant intactId="EBI-15651799">
        <id>Q02297-6</id>
        <label>NRG1</label>
    </interactant>
    <organismsDiffer>false</organismsDiffer>
    <experiments>3</experiments>
</comment>
<comment type="interaction">
    <interactant intactId="EBI-80371">
        <id>Q15303</id>
    </interactant>
    <interactant intactId="EBI-717058">
        <id>P26447</id>
        <label>S100A4</label>
    </interactant>
    <organismsDiffer>false</organismsDiffer>
    <experiments>4</experiments>
</comment>
<comment type="interaction">
    <interactant intactId="EBI-80371">
        <id>Q15303</id>
    </interactant>
    <interactant intactId="EBI-78835">
        <id>P29353</id>
        <label>SHC1</label>
    </interactant>
    <organismsDiffer>false</organismsDiffer>
    <experiments>2</experiments>
</comment>
<comment type="interaction">
    <interactant intactId="EBI-80371">
        <id>Q15303</id>
    </interactant>
    <interactant intactId="EBI-2349743">
        <id>Q12815</id>
        <label>TROAP</label>
    </interactant>
    <organismsDiffer>false</organismsDiffer>
    <experiments>3</experiments>
</comment>
<comment type="interaction">
    <interactant intactId="EBI-80371">
        <id>Q15303</id>
    </interactant>
    <interactant intactId="EBI-1044059">
        <id>P46937</id>
        <label>YAP1</label>
    </interactant>
    <organismsDiffer>false</organismsDiffer>
    <experiments>3</experiments>
</comment>
<comment type="interaction">
    <interactant intactId="EBI-80371">
        <id>Q15303</id>
    </interactant>
    <interactant intactId="EBI-356498">
        <id>P62258</id>
        <label>YWHAE</label>
    </interactant>
    <organismsDiffer>false</organismsDiffer>
    <experiments>2</experiments>
</comment>
<comment type="interaction">
    <interactant intactId="EBI-15692884">
        <id>Q15303-3</id>
    </interactant>
    <interactant intactId="EBI-6672198">
        <id>Q96J02-2</id>
        <label>ITCH</label>
    </interactant>
    <organismsDiffer>false</organismsDiffer>
    <experiments>2</experiments>
</comment>
<comment type="subcellular location">
    <subcellularLocation>
        <location evidence="6 15 17 21 22 24 28 29 34 36 41 47">Cell membrane</location>
        <topology evidence="6 15 17 21 22 24 28 29 34 36 41 47">Single-pass type I membrane protein</topology>
    </subcellularLocation>
    <text>In response to NRG1 treatment, the activated receptor is internalized.</text>
</comment>
<comment type="subcellular location">
    <molecule>ERBB4 intracellular domain</molecule>
    <subcellularLocation>
        <location evidence="28">Nucleus</location>
    </subcellularLocation>
    <subcellularLocation>
        <location evidence="28">Mitochondrion</location>
    </subcellularLocation>
    <text>Following proteolytical processing E4ICD (E4ICD1 or E4ICD2 generated from the respective isoforms) is translocated to the nucleus. Significantly more E4ICD2 than E4ICD1 is found in the nucleus. E4ICD2 colocalizes with YAP1 in the nucleus.</text>
</comment>
<comment type="alternative products">
    <event type="alternative splicing"/>
    <isoform>
        <id>Q15303-1</id>
        <name>JM-A CYT-1</name>
        <sequence type="displayed"/>
    </isoform>
    <isoform>
        <id>Q15303-2</id>
        <name>JM-B CYT-1</name>
        <sequence type="described" ref="VSP_002895"/>
    </isoform>
    <isoform>
        <id>Q15303-3</id>
        <name>JM-A CYT-2</name>
        <sequence type="described" ref="VSP_022148"/>
    </isoform>
    <isoform>
        <id>Q15303-4</id>
        <name>JM-B CYT-2</name>
        <sequence type="described" ref="VSP_002895 VSP_022148"/>
    </isoform>
</comment>
<comment type="tissue specificity">
    <text evidence="7 41 47">Expressed at highest levels in brain, heart, kidney, in addition to skeletal muscle, parathyroid, cerebellum, pituitary, spleen, testis and breast. Lower levels in thymus, lung, salivary gland, and pancreas. Isoform JM-A CYT-1 and isoform JM-B CYT-1 are expressed in cerebellum, but only the isoform JM-B is expressed in the heart.</text>
</comment>
<comment type="PTM">
    <text evidence="11 15 18 24 29 47">Isoform JM-A CYT-1 and isoform JM-A CYT-2 are processed by ADAM17. Proteolytic processing in response to ligand or 12-O-tetradecanoylphorbol-13-acetate stimulation results in the production of 120 kDa soluble receptor forms and intermediate membrane-anchored 80 kDa fragments (m80HER4), which are further processed by a presenilin-dependent gamma-secretase to release a cytoplasmic intracellular domain (E4ICD; E4ICD1/s80Cyt1 or E4ICD2/s80Cyt2, depending on the isoform). Membrane-anchored 80 kDa fragments of the processed isoform JM-A CYT-1 are more readily degraded by the proteasome than fragments of isoform JM-A CYT-2, suggesting a prevalence of E4ICD2 over E4ICD1. Isoform JM-B CYT-1 and isoform JM-B CYT-2 lack the ADAM17 cleavage site and are not processed by ADAM17, precluding further processing by gamma-secretase.</text>
</comment>
<comment type="PTM">
    <text evidence="21 26 28 32 33 43 45">Autophosphorylated on tyrosine residues in response to ligand binding. Autophosphorylation occurs in trans, i.e. one subunit of the dimeric receptor phosphorylates tyrosine residues on the other subunit. Ligands trigger phosphorylation at specific tyrosine residues, thereby creating binding sites for scaffold proteins and effectors. Constitutively phosphorylated at a basal level when overexpressed in heterologous systems; ligand binding leads to increased phosphorylation. Phosphorylation at Tyr-1035 is important for interaction with STAT1. Phosphorylation at Tyr-1056 is important for interaction with PIK3R1. Phosphorylation at Tyr-1242 is important for interaction with SHC1. Phosphorylation at Tyr-1188 may also contribute to the interaction with SHC1. Isoform JM-A CYT-2 is constitutively phosphorylated on tyrosine residues in a ligand-independent manner. E4ICD2 but not E4ICD1 is phosphorylated on tyrosine residues.</text>
</comment>
<comment type="PTM">
    <text evidence="29 34">Ubiquitinated. During mitosis, the ERBB4 intracellular domain is ubiquitinated by the APC/C complex and targeted to proteasomal degradation. Isoform JM-A CYT-1 and isoform JM-B CYT-1 are ubiquitinated by WWP1. The ERBB4 intracellular domain (E4ICD1) is ubiquitinated, and this involves NEDD4.</text>
</comment>
<comment type="disease" evidence="38">
    <disease id="DI-03940">
        <name>Amyotrophic lateral sclerosis 19</name>
        <acronym>ALS19</acronym>
        <description>A neurodegenerative disorder affecting upper motor neurons in the brain and lower motor neurons in the brain stem and spinal cord, resulting in fatal paralysis. Sensory abnormalities are absent. The pathologic hallmarks of the disease include pallor of the corticospinal tract due to loss of motor neurons, presence of ubiquitin-positive inclusions within surviving motor neurons, and deposition of pathologic aggregates. The etiology of amyotrophic lateral sclerosis is likely to be multifactorial, involving both genetic and environmental factors. The disease is inherited in 5-10% of the cases.</description>
        <dbReference type="MIM" id="615515"/>
    </disease>
    <text>The disease is caused by variants affecting the gene represented in this entry.</text>
</comment>
<comment type="miscellaneous">
    <molecule>Isoform JM-A CYT-1</molecule>
    <text>Proteolytical processing generates E4ICD1 (s80Cyt1).</text>
</comment>
<comment type="miscellaneous">
    <molecule>Isoform JM-A CYT-2</molecule>
    <text evidence="53">Proteolytical processing generates E4ICD2 (s80Cyt2).</text>
</comment>
<comment type="similarity">
    <text evidence="3">Belongs to the protein kinase superfamily. Tyr protein kinase family. EGF receptor subfamily.</text>
</comment>
<comment type="caution">
    <text evidence="54">Conflicting reports about the role of ERBB4 in mediating apoptosis, differentiation, or tumor cell proliferation may be explained by the opposite functions of the different isoforms and their intracellular fragments, and by the formation of heterodimers with other EGF receptor family members (PubMed:18454307, PubMed:21811097). Thus, heterodimer formation of a kinase-dead ERBB4 mutant with ERBB2 is sufficient for the activation of AKT1, MAPK1/ERK2 and MAPK3/ERK1 (PubMed:19098003).</text>
</comment>
<evidence type="ECO:0000250" key="1"/>
<evidence type="ECO:0000255" key="2"/>
<evidence type="ECO:0000255" key="3">
    <source>
        <dbReference type="PROSITE-ProRule" id="PRU00159"/>
    </source>
</evidence>
<evidence type="ECO:0000255" key="4">
    <source>
        <dbReference type="PROSITE-ProRule" id="PRU10028"/>
    </source>
</evidence>
<evidence type="ECO:0000256" key="5">
    <source>
        <dbReference type="SAM" id="MobiDB-lite"/>
    </source>
</evidence>
<evidence type="ECO:0000269" key="6">
    <source>
    </source>
</evidence>
<evidence type="ECO:0000269" key="7">
    <source>
    </source>
</evidence>
<evidence type="ECO:0000269" key="8">
    <source>
    </source>
</evidence>
<evidence type="ECO:0000269" key="9">
    <source>
    </source>
</evidence>
<evidence type="ECO:0000269" key="10">
    <source>
    </source>
</evidence>
<evidence type="ECO:0000269" key="11">
    <source>
    </source>
</evidence>
<evidence type="ECO:0000269" key="12">
    <source>
    </source>
</evidence>
<evidence type="ECO:0000269" key="13">
    <source>
    </source>
</evidence>
<evidence type="ECO:0000269" key="14">
    <source>
    </source>
</evidence>
<evidence type="ECO:0000269" key="15">
    <source>
    </source>
</evidence>
<evidence type="ECO:0000269" key="16">
    <source>
    </source>
</evidence>
<evidence type="ECO:0000269" key="17">
    <source>
    </source>
</evidence>
<evidence type="ECO:0000269" key="18">
    <source>
    </source>
</evidence>
<evidence type="ECO:0000269" key="19">
    <source>
    </source>
</evidence>
<evidence type="ECO:0000269" key="20">
    <source>
    </source>
</evidence>
<evidence type="ECO:0000269" key="21">
    <source>
    </source>
</evidence>
<evidence type="ECO:0000269" key="22">
    <source>
    </source>
</evidence>
<evidence type="ECO:0000269" key="23">
    <source>
    </source>
</evidence>
<evidence type="ECO:0000269" key="24">
    <source>
    </source>
</evidence>
<evidence type="ECO:0000269" key="25">
    <source>
    </source>
</evidence>
<evidence type="ECO:0000269" key="26">
    <source>
    </source>
</evidence>
<evidence type="ECO:0000269" key="27">
    <source>
    </source>
</evidence>
<evidence type="ECO:0000269" key="28">
    <source>
    </source>
</evidence>
<evidence type="ECO:0000269" key="29">
    <source>
    </source>
</evidence>
<evidence type="ECO:0000269" key="30">
    <source>
    </source>
</evidence>
<evidence type="ECO:0000269" key="31">
    <source>
    </source>
</evidence>
<evidence type="ECO:0000269" key="32">
    <source>
    </source>
</evidence>
<evidence type="ECO:0000269" key="33">
    <source>
    </source>
</evidence>
<evidence type="ECO:0000269" key="34">
    <source>
    </source>
</evidence>
<evidence type="ECO:0000269" key="35">
    <source>
    </source>
</evidence>
<evidence type="ECO:0000269" key="36">
    <source>
    </source>
</evidence>
<evidence type="ECO:0000269" key="37">
    <source>
    </source>
</evidence>
<evidence type="ECO:0000269" key="38">
    <source>
    </source>
</evidence>
<evidence type="ECO:0000269" key="39">
    <source>
    </source>
</evidence>
<evidence type="ECO:0000269" key="40">
    <source>
    </source>
</evidence>
<evidence type="ECO:0000269" key="41">
    <source>
    </source>
</evidence>
<evidence type="ECO:0000269" key="42">
    <source>
    </source>
</evidence>
<evidence type="ECO:0000269" key="43">
    <source>
    </source>
</evidence>
<evidence type="ECO:0000269" key="44">
    <source>
    </source>
</evidence>
<evidence type="ECO:0000269" key="45">
    <source>
    </source>
</evidence>
<evidence type="ECO:0000269" key="46">
    <source>
    </source>
</evidence>
<evidence type="ECO:0000269" key="47">
    <source>
    </source>
</evidence>
<evidence type="ECO:0000269" key="48">
    <source>
    </source>
</evidence>
<evidence type="ECO:0000269" key="49">
    <source>
    </source>
</evidence>
<evidence type="ECO:0000303" key="50">
    <source>
    </source>
</evidence>
<evidence type="ECO:0000303" key="51">
    <source>
    </source>
</evidence>
<evidence type="ECO:0000303" key="52">
    <source ref="4"/>
</evidence>
<evidence type="ECO:0000305" key="53"/>
<evidence type="ECO:0000305" key="54">
    <source>
    </source>
</evidence>
<evidence type="ECO:0007829" key="55">
    <source>
        <dbReference type="PDB" id="2AHX"/>
    </source>
</evidence>
<evidence type="ECO:0007829" key="56">
    <source>
        <dbReference type="PDB" id="2L2T"/>
    </source>
</evidence>
<evidence type="ECO:0007829" key="57">
    <source>
        <dbReference type="PDB" id="2R4B"/>
    </source>
</evidence>
<evidence type="ECO:0007829" key="58">
    <source>
        <dbReference type="PDB" id="3BBT"/>
    </source>
</evidence>
<evidence type="ECO:0007829" key="59">
    <source>
        <dbReference type="PDB" id="3U2P"/>
    </source>
</evidence>
<evidence type="ECO:0007829" key="60">
    <source>
        <dbReference type="PDB" id="3U7U"/>
    </source>
</evidence>
<evidence type="ECO:0007829" key="61">
    <source>
        <dbReference type="PDB" id="8U4L"/>
    </source>
</evidence>
<proteinExistence type="evidence at protein level"/>
<organism>
    <name type="scientific">Homo sapiens</name>
    <name type="common">Human</name>
    <dbReference type="NCBI Taxonomy" id="9606"/>
    <lineage>
        <taxon>Eukaryota</taxon>
        <taxon>Metazoa</taxon>
        <taxon>Chordata</taxon>
        <taxon>Craniata</taxon>
        <taxon>Vertebrata</taxon>
        <taxon>Euteleostomi</taxon>
        <taxon>Mammalia</taxon>
        <taxon>Eutheria</taxon>
        <taxon>Euarchontoglires</taxon>
        <taxon>Primates</taxon>
        <taxon>Haplorrhini</taxon>
        <taxon>Catarrhini</taxon>
        <taxon>Hominidae</taxon>
        <taxon>Homo</taxon>
    </lineage>
</organism>
<keyword id="KW-0002">3D-structure</keyword>
<keyword id="KW-0010">Activator</keyword>
<keyword id="KW-0025">Alternative splicing</keyword>
<keyword id="KW-0036">Amyotrophic lateral sclerosis</keyword>
<keyword id="KW-0053">Apoptosis</keyword>
<keyword id="KW-0067">ATP-binding</keyword>
<keyword id="KW-1003">Cell membrane</keyword>
<keyword id="KW-0217">Developmental protein</keyword>
<keyword id="KW-0225">Disease variant</keyword>
<keyword id="KW-1015">Disulfide bond</keyword>
<keyword id="KW-0325">Glycoprotein</keyword>
<keyword id="KW-0418">Kinase</keyword>
<keyword id="KW-0421">Lactation</keyword>
<keyword id="KW-0472">Membrane</keyword>
<keyword id="KW-0496">Mitochondrion</keyword>
<keyword id="KW-0523">Neurodegeneration</keyword>
<keyword id="KW-0547">Nucleotide-binding</keyword>
<keyword id="KW-0539">Nucleus</keyword>
<keyword id="KW-0597">Phosphoprotein</keyword>
<keyword id="KW-1267">Proteomics identification</keyword>
<keyword id="KW-0675">Receptor</keyword>
<keyword id="KW-1185">Reference proteome</keyword>
<keyword id="KW-0677">Repeat</keyword>
<keyword id="KW-0732">Signal</keyword>
<keyword id="KW-0804">Transcription</keyword>
<keyword id="KW-0805">Transcription regulation</keyword>
<keyword id="KW-0808">Transferase</keyword>
<keyword id="KW-0812">Transmembrane</keyword>
<keyword id="KW-1133">Transmembrane helix</keyword>
<keyword id="KW-0829">Tyrosine-protein kinase</keyword>
<keyword id="KW-0832">Ubl conjugation</keyword>
<gene>
    <name type="primary">ERBB4</name>
    <name type="synonym">HER4</name>
</gene>
<feature type="signal peptide" evidence="2">
    <location>
        <begin position="1"/>
        <end position="25"/>
    </location>
</feature>
<feature type="chain" id="PRO_0000016674" description="Receptor tyrosine-protein kinase erbB-4">
    <location>
        <begin position="26"/>
        <end position="1308"/>
    </location>
</feature>
<feature type="chain" id="PRO_0000396797" description="ERBB4 intracellular domain" evidence="1">
    <location>
        <begin position="676"/>
        <end position="1308"/>
    </location>
</feature>
<feature type="topological domain" description="Extracellular" evidence="2">
    <location>
        <begin position="26"/>
        <end position="651"/>
    </location>
</feature>
<feature type="transmembrane region" description="Helical" evidence="2">
    <location>
        <begin position="652"/>
        <end position="675"/>
    </location>
</feature>
<feature type="topological domain" description="Cytoplasmic" evidence="2">
    <location>
        <begin position="676"/>
        <end position="1308"/>
    </location>
</feature>
<feature type="domain" description="Protein kinase" evidence="3">
    <location>
        <begin position="718"/>
        <end position="985"/>
    </location>
</feature>
<feature type="region of interest" description="Disordered" evidence="5">
    <location>
        <begin position="1117"/>
        <end position="1150"/>
    </location>
</feature>
<feature type="short sequence motif" description="Nuclear localization signal">
    <location>
        <begin position="676"/>
        <end position="684"/>
    </location>
</feature>
<feature type="short sequence motif" description="PPxY motif 1">
    <location>
        <begin position="1032"/>
        <end position="1035"/>
    </location>
</feature>
<feature type="short sequence motif" description="PPxY motif 2">
    <location>
        <begin position="1053"/>
        <end position="1056"/>
    </location>
</feature>
<feature type="short sequence motif" description="PPxY motif 3">
    <location>
        <begin position="1298"/>
        <end position="1301"/>
    </location>
</feature>
<feature type="short sequence motif" description="PDZ-binding">
    <location>
        <begin position="1306"/>
        <end position="1308"/>
    </location>
</feature>
<feature type="active site" description="Proton acceptor" evidence="3 4">
    <location>
        <position position="843"/>
    </location>
</feature>
<feature type="binding site" evidence="3">
    <location>
        <begin position="724"/>
        <end position="732"/>
    </location>
    <ligand>
        <name>ATP</name>
        <dbReference type="ChEBI" id="CHEBI:30616"/>
    </ligand>
</feature>
<feature type="binding site" evidence="3">
    <location>
        <position position="751"/>
    </location>
    <ligand>
        <name>ATP</name>
        <dbReference type="ChEBI" id="CHEBI:30616"/>
    </ligand>
</feature>
<feature type="binding site" evidence="3">
    <location>
        <begin position="797"/>
        <end position="799"/>
    </location>
    <ligand>
        <name>ATP</name>
        <dbReference type="ChEBI" id="CHEBI:30616"/>
    </ligand>
</feature>
<feature type="binding site" evidence="3">
    <location>
        <begin position="843"/>
        <end position="848"/>
    </location>
    <ligand>
        <name>ATP</name>
        <dbReference type="ChEBI" id="CHEBI:30616"/>
    </ligand>
</feature>
<feature type="modified residue" description="Phosphotyrosine; by autocatalysis" evidence="32">
    <location>
        <position position="875"/>
    </location>
</feature>
<feature type="modified residue" description="Phosphotyrosine; by autocatalysis" evidence="32">
    <location>
        <position position="1035"/>
    </location>
</feature>
<feature type="modified residue" description="Phosphotyrosine; by autocatalysis" evidence="26 32 43">
    <location>
        <position position="1056"/>
    </location>
</feature>
<feature type="modified residue" description="Phosphotyrosine; by autocatalysis" evidence="32">
    <location>
        <position position="1150"/>
    </location>
</feature>
<feature type="modified residue" description="Phosphotyrosine; by autocatalysis" evidence="32">
    <location>
        <position position="1162"/>
    </location>
</feature>
<feature type="modified residue" description="Phosphotyrosine; by autocatalysis" evidence="32 43">
    <location>
        <position position="1188"/>
    </location>
</feature>
<feature type="modified residue" description="Phosphotyrosine; by autocatalysis" evidence="32">
    <location>
        <position position="1202"/>
    </location>
</feature>
<feature type="modified residue" description="Phosphotyrosine; by autocatalysis" evidence="32 43">
    <location>
        <position position="1242"/>
    </location>
</feature>
<feature type="modified residue" description="Phosphotyrosine; by autocatalysis" evidence="32">
    <location>
        <position position="1258"/>
    </location>
</feature>
<feature type="modified residue" description="Phosphotyrosine; by autocatalysis" evidence="32">
    <location>
        <position position="1284"/>
    </location>
</feature>
<feature type="glycosylation site" description="N-linked (GlcNAc...) asparagine" evidence="20">
    <location>
        <position position="138"/>
    </location>
</feature>
<feature type="glycosylation site" description="N-linked (GlcNAc...) asparagine" evidence="20">
    <location>
        <position position="174"/>
    </location>
</feature>
<feature type="glycosylation site" description="N-linked (GlcNAc...) asparagine" evidence="2">
    <location>
        <position position="181"/>
    </location>
</feature>
<feature type="glycosylation site" description="N-linked (GlcNAc...) asparagine" evidence="20">
    <location>
        <position position="253"/>
    </location>
</feature>
<feature type="glycosylation site" description="N-linked (GlcNAc...) asparagine" evidence="20">
    <location>
        <position position="358"/>
    </location>
</feature>
<feature type="glycosylation site" description="N-linked (GlcNAc...) asparagine" evidence="20">
    <location>
        <position position="410"/>
    </location>
</feature>
<feature type="glycosylation site" description="N-linked (GlcNAc...) asparagine" evidence="20">
    <location>
        <position position="473"/>
    </location>
</feature>
<feature type="glycosylation site" description="N-linked (GlcNAc...) asparagine" evidence="20">
    <location>
        <position position="495"/>
    </location>
</feature>
<feature type="glycosylation site" description="N-linked (GlcNAc...) asparagine" evidence="2">
    <location>
        <position position="548"/>
    </location>
</feature>
<feature type="glycosylation site" description="N-linked (GlcNAc...) asparagine" evidence="20">
    <location>
        <position position="576"/>
    </location>
</feature>
<feature type="glycosylation site" description="N-linked (GlcNAc...) asparagine" evidence="2">
    <location>
        <position position="620"/>
    </location>
</feature>
<feature type="disulfide bond" evidence="20">
    <location>
        <begin position="29"/>
        <end position="56"/>
    </location>
</feature>
<feature type="disulfide bond" evidence="20">
    <location>
        <begin position="156"/>
        <end position="186"/>
    </location>
</feature>
<feature type="disulfide bond" evidence="20">
    <location>
        <begin position="189"/>
        <end position="197"/>
    </location>
</feature>
<feature type="disulfide bond" evidence="20">
    <location>
        <begin position="193"/>
        <end position="205"/>
    </location>
</feature>
<feature type="disulfide bond" evidence="20">
    <location>
        <begin position="213"/>
        <end position="221"/>
    </location>
</feature>
<feature type="disulfide bond" evidence="20">
    <location>
        <begin position="217"/>
        <end position="229"/>
    </location>
</feature>
<feature type="disulfide bond" evidence="20">
    <location>
        <begin position="230"/>
        <end position="238"/>
    </location>
</feature>
<feature type="disulfide bond" evidence="20">
    <location>
        <begin position="234"/>
        <end position="246"/>
    </location>
</feature>
<feature type="disulfide bond" evidence="20">
    <location>
        <begin position="249"/>
        <end position="258"/>
    </location>
</feature>
<feature type="disulfide bond" evidence="20">
    <location>
        <begin position="262"/>
        <end position="289"/>
    </location>
</feature>
<feature type="disulfide bond" evidence="20">
    <location>
        <begin position="293"/>
        <end position="304"/>
    </location>
</feature>
<feature type="disulfide bond" evidence="20">
    <location>
        <begin position="308"/>
        <end position="323"/>
    </location>
</feature>
<feature type="disulfide bond" evidence="20">
    <location>
        <begin position="326"/>
        <end position="330"/>
    </location>
</feature>
<feature type="disulfide bond" evidence="20">
    <location>
        <begin position="503"/>
        <end position="512"/>
    </location>
</feature>
<feature type="disulfide bond" evidence="20">
    <location>
        <begin position="507"/>
        <end position="520"/>
    </location>
</feature>
<feature type="disulfide bond" evidence="20">
    <location>
        <begin position="523"/>
        <end position="532"/>
    </location>
</feature>
<feature type="disulfide bond" evidence="20">
    <location>
        <begin position="536"/>
        <end position="552"/>
    </location>
</feature>
<feature type="disulfide bond" evidence="20">
    <location>
        <begin position="555"/>
        <end position="569"/>
    </location>
</feature>
<feature type="disulfide bond" evidence="20">
    <location>
        <begin position="559"/>
        <end position="577"/>
    </location>
</feature>
<feature type="disulfide bond" evidence="20">
    <location>
        <begin position="580"/>
        <end position="589"/>
    </location>
</feature>
<feature type="disulfide bond" evidence="20">
    <location>
        <begin position="593"/>
        <end position="614"/>
    </location>
</feature>
<feature type="disulfide bond" evidence="20">
    <location>
        <begin position="617"/>
        <end position="625"/>
    </location>
</feature>
<feature type="disulfide bond" evidence="20">
    <location>
        <begin position="621"/>
        <end position="633"/>
    </location>
</feature>
<feature type="splice variant" id="VSP_002895" description="In isoform JM-B CYT-1 and isoform JM-B CYT-2." evidence="50 51">
    <original>NGPTSHDCIYYPWTGHSTLPQHA</original>
    <variation>IGSSIEDCIGLMD</variation>
    <location>
        <begin position="626"/>
        <end position="648"/>
    </location>
</feature>
<feature type="splice variant" id="VSP_022148" description="In isoform JM-A CYT-2 and isoform JM-B CYT-2." evidence="50 52">
    <location>
        <begin position="1046"/>
        <end position="1061"/>
    </location>
</feature>
<feature type="sequence variant" id="VAR_042113" description="In a colorectal adenocarcinoma sample; somatic mutation." evidence="27">
    <original>T</original>
    <variation>I</variation>
    <location>
        <position position="140"/>
    </location>
</feature>
<feature type="sequence variant" id="VAR_042114" description="In a lung squamous cell carcinoma sample; somatic mutation; dbSNP:rs1484791833." evidence="27">
    <original>S</original>
    <variation>Y</variation>
    <location>
        <position position="303"/>
    </location>
</feature>
<feature type="sequence variant" id="VAR_070810" description="In ALS19; reduces autophosphorylation upon NRG1 stimulation; dbSNP:rs397514262." evidence="38">
    <original>R</original>
    <variation>Q</variation>
    <location>
        <position position="927"/>
    </location>
</feature>
<feature type="sequence variant" id="VAR_070811" description="In ALS19; reduces autophosphorylation upon NRG1 stimulation; dbSNP:rs397514263." evidence="38">
    <original>R</original>
    <variation>W</variation>
    <location>
        <position position="1275"/>
    </location>
</feature>
<feature type="mutagenesis site" description="Constitutively activated kinase." evidence="26">
    <original>Q</original>
    <variation>C</variation>
    <location>
        <position position="646"/>
    </location>
</feature>
<feature type="mutagenesis site" description="Abolishes proteolytic processing and nuclear localization." evidence="18 29">
    <original>V</original>
    <variation>A</variation>
    <location>
        <position position="675"/>
    </location>
</feature>
<feature type="mutagenesis site" description="Abolishes nuclear localization of the ERBB4 intracellular domain." evidence="17">
    <original>KKKR</original>
    <variation>EIMG</variation>
    <location>
        <begin position="681"/>
        <end position="684"/>
    </location>
</feature>
<feature type="mutagenesis site" description="Strongly reduced autophosphorylation." evidence="30">
    <original>L</original>
    <variation>N</variation>
    <location>
        <position position="710"/>
    </location>
</feature>
<feature type="mutagenesis site" description="No effect on kinase activity." evidence="33">
    <original>V</original>
    <variation>I</variation>
    <location>
        <position position="721"/>
    </location>
</feature>
<feature type="mutagenesis site" description="Abolishes kinase activity. Abolishes phosphorylation, proteolytic processing and nuclear localization." evidence="14 28 29">
    <original>K</original>
    <variation>R</variation>
    <location>
        <position position="751"/>
    </location>
</feature>
<feature type="mutagenesis site" description="Strongly reduced autophosphorylation." evidence="30">
    <original>M</original>
    <variation>R</variation>
    <location>
        <position position="766"/>
    </location>
</feature>
<feature type="mutagenesis site" description="No effect on kinase activity." evidence="33">
    <original>A</original>
    <variation>S</variation>
    <location>
        <position position="773"/>
    </location>
</feature>
<feature type="mutagenesis site" description="No effect on kinase activity." evidence="33">
    <original>R</original>
    <variation>Q</variation>
    <location>
        <position position="782"/>
    </location>
</feature>
<feature type="mutagenesis site" description="No effect on kinase activity." evidence="33">
    <original>E</original>
    <variation>K</variation>
    <location>
        <position position="810"/>
    </location>
</feature>
<feature type="mutagenesis site" description="Loss of kinase activity." evidence="25">
    <original>D</original>
    <variation>N</variation>
    <location>
        <position position="843"/>
    </location>
</feature>
<feature type="mutagenesis site" description="No effect on kinase activity." evidence="33">
    <original>P</original>
    <variation>Q</variation>
    <location>
        <position position="854"/>
    </location>
</feature>
<feature type="mutagenesis site" description="Loss of kinase activity." evidence="33">
    <original>D</original>
    <variation>Y</variation>
    <location>
        <position position="861"/>
    </location>
</feature>
<feature type="mutagenesis site" description="Strongly reduced autophosphorylation." evidence="30">
    <original>L</original>
    <variation>R</variation>
    <location>
        <position position="864"/>
    </location>
</feature>
<feature type="mutagenesis site" description="No effect on kinase activity." evidence="33">
    <original>E</original>
    <variation>K</variation>
    <location>
        <position position="872"/>
    </location>
</feature>
<feature type="mutagenesis site" description="No effect on kinase activity." evidence="33">
    <original>T</original>
    <variation>M</variation>
    <location>
        <position position="926"/>
    </location>
</feature>
<feature type="mutagenesis site" description="Constitutively autophosphorylated." evidence="30">
    <original>I</original>
    <variation>R</variation>
    <location>
        <position position="947"/>
    </location>
</feature>
<feature type="mutagenesis site" description="Abolishes APC/C-mediated degradation; when associated with A-995 and A-1000." evidence="29">
    <original>R</original>
    <variation>A</variation>
    <location>
        <position position="992"/>
    </location>
</feature>
<feature type="mutagenesis site" description="Abolishes APC/C-mediated degradation; when associated with A-992 and A-1000." evidence="29">
    <original>L</original>
    <variation>A</variation>
    <location>
        <position position="995"/>
    </location>
</feature>
<feature type="mutagenesis site" description="Abolishes APC/C-mediated degradation; when associated with A-992 and A-995." evidence="29">
    <original>D</original>
    <variation>A</variation>
    <location>
        <position position="1000"/>
    </location>
</feature>
<feature type="mutagenesis site" description="No effect on interaction with WWOX. Abolishes interaction with WWOX; when associated with A-1301." evidence="19">
    <original>Y</original>
    <variation>A</variation>
    <location>
        <position position="1035"/>
    </location>
</feature>
<feature type="mutagenesis site" description="Abolishes interaction with NEDD4 and impairs ubiquitination. Promotes nuclear translocation of ERBB4 intracellular domain E4ICD1." evidence="35">
    <original>Y</original>
    <variation>A</variation>
    <location>
        <position position="1056"/>
    </location>
</feature>
<feature type="mutagenesis site" description="Abolishes interaction with WWP1; when associated with F-1301." evidence="35">
    <original>Y</original>
    <variation>F</variation>
    <location>
        <position position="1056"/>
    </location>
</feature>
<feature type="mutagenesis site" description="Abolishes interaction with NEDD4 and impairs ubiquitination." evidence="15 19 35">
    <original>Y</original>
    <variation>A</variation>
    <location>
        <position position="1301"/>
    </location>
</feature>
<feature type="mutagenesis site" description="No effect on interaction with WWOX. Abolishes interaction with WWOX; when associated with A-1035. Loss of interaction with YAP1 and stimulation of transcription." evidence="15 19 35">
    <original>Y</original>
    <variation>A</variation>
    <location>
        <position position="1301"/>
    </location>
</feature>
<feature type="mutagenesis site" description="Abolishes interaction with WWP1; when associated with F-1056." evidence="15 19 35">
    <original>Y</original>
    <variation>F</variation>
    <location>
        <position position="1301"/>
    </location>
</feature>
<feature type="strand" evidence="55">
    <location>
        <begin position="28"/>
        <end position="30"/>
    </location>
</feature>
<feature type="strand" evidence="60">
    <location>
        <begin position="38"/>
        <end position="41"/>
    </location>
</feature>
<feature type="helix" evidence="55">
    <location>
        <begin position="42"/>
        <end position="53"/>
    </location>
</feature>
<feature type="strand" evidence="55">
    <location>
        <begin position="57"/>
        <end position="61"/>
    </location>
</feature>
<feature type="strand" evidence="55">
    <location>
        <begin position="63"/>
        <end position="67"/>
    </location>
</feature>
<feature type="helix" evidence="55">
    <location>
        <begin position="75"/>
        <end position="79"/>
    </location>
</feature>
<feature type="strand" evidence="55">
    <location>
        <begin position="82"/>
        <end position="85"/>
    </location>
</feature>
<feature type="strand" evidence="55">
    <location>
        <begin position="87"/>
        <end position="91"/>
    </location>
</feature>
<feature type="strand" evidence="55">
    <location>
        <begin position="95"/>
        <end position="98"/>
    </location>
</feature>
<feature type="turn" evidence="55">
    <location>
        <begin position="112"/>
        <end position="114"/>
    </location>
</feature>
<feature type="strand" evidence="55">
    <location>
        <begin position="115"/>
        <end position="120"/>
    </location>
</feature>
<feature type="strand" evidence="59">
    <location>
        <begin position="125"/>
        <end position="128"/>
    </location>
</feature>
<feature type="strand" evidence="55">
    <location>
        <begin position="133"/>
        <end position="135"/>
    </location>
</feature>
<feature type="strand" evidence="55">
    <location>
        <begin position="144"/>
        <end position="150"/>
    </location>
</feature>
<feature type="helix" evidence="55">
    <location>
        <begin position="158"/>
        <end position="160"/>
    </location>
</feature>
<feature type="helix" evidence="55">
    <location>
        <begin position="163"/>
        <end position="165"/>
    </location>
</feature>
<feature type="strand" evidence="61">
    <location>
        <begin position="167"/>
        <end position="169"/>
    </location>
</feature>
<feature type="helix" evidence="55">
    <location>
        <begin position="173"/>
        <end position="175"/>
    </location>
</feature>
<feature type="strand" evidence="55">
    <location>
        <begin position="176"/>
        <end position="178"/>
    </location>
</feature>
<feature type="turn" evidence="55">
    <location>
        <begin position="191"/>
        <end position="193"/>
    </location>
</feature>
<feature type="strand" evidence="55">
    <location>
        <begin position="197"/>
        <end position="201"/>
    </location>
</feature>
<feature type="helix" evidence="55">
    <location>
        <begin position="202"/>
        <end position="204"/>
    </location>
</feature>
<feature type="strand" evidence="61">
    <location>
        <begin position="209"/>
        <end position="213"/>
    </location>
</feature>
<feature type="strand" evidence="55">
    <location>
        <begin position="221"/>
        <end position="225"/>
    </location>
</feature>
<feature type="helix" evidence="55">
    <location>
        <begin position="226"/>
        <end position="228"/>
    </location>
</feature>
<feature type="strand" evidence="55">
    <location>
        <begin position="234"/>
        <end position="242"/>
    </location>
</feature>
<feature type="strand" evidence="55">
    <location>
        <begin position="245"/>
        <end position="254"/>
    </location>
</feature>
<feature type="strand" evidence="55">
    <location>
        <begin position="257"/>
        <end position="261"/>
    </location>
</feature>
<feature type="strand" evidence="55">
    <location>
        <begin position="265"/>
        <end position="269"/>
    </location>
</feature>
<feature type="turn" evidence="55">
    <location>
        <begin position="270"/>
        <end position="273"/>
    </location>
</feature>
<feature type="strand" evidence="55">
    <location>
        <begin position="274"/>
        <end position="277"/>
    </location>
</feature>
<feature type="strand" evidence="55">
    <location>
        <begin position="283"/>
        <end position="285"/>
    </location>
</feature>
<feature type="strand" evidence="55">
    <location>
        <begin position="288"/>
        <end position="292"/>
    </location>
</feature>
<feature type="strand" evidence="55">
    <location>
        <begin position="298"/>
        <end position="300"/>
    </location>
</feature>
<feature type="strand" evidence="55">
    <location>
        <begin position="303"/>
        <end position="307"/>
    </location>
</feature>
<feature type="strand" evidence="55">
    <location>
        <begin position="312"/>
        <end position="317"/>
    </location>
</feature>
<feature type="strand" evidence="55">
    <location>
        <begin position="320"/>
        <end position="325"/>
    </location>
</feature>
<feature type="strand" evidence="59">
    <location>
        <begin position="327"/>
        <end position="329"/>
    </location>
</feature>
<feature type="strand" evidence="55">
    <location>
        <begin position="333"/>
        <end position="335"/>
    </location>
</feature>
<feature type="helix" evidence="55">
    <location>
        <begin position="340"/>
        <end position="342"/>
    </location>
</feature>
<feature type="turn" evidence="55">
    <location>
        <begin position="350"/>
        <end position="352"/>
    </location>
</feature>
<feature type="helix" evidence="55">
    <location>
        <begin position="353"/>
        <end position="356"/>
    </location>
</feature>
<feature type="strand" evidence="55">
    <location>
        <begin position="360"/>
        <end position="364"/>
    </location>
</feature>
<feature type="strand" evidence="55">
    <location>
        <begin position="366"/>
        <end position="368"/>
    </location>
</feature>
<feature type="helix" evidence="55">
    <location>
        <begin position="370"/>
        <end position="374"/>
    </location>
</feature>
<feature type="helix" evidence="55">
    <location>
        <begin position="377"/>
        <end position="379"/>
    </location>
</feature>
<feature type="helix" evidence="55">
    <location>
        <begin position="386"/>
        <end position="394"/>
    </location>
</feature>
<feature type="strand" evidence="55">
    <location>
        <begin position="397"/>
        <end position="400"/>
    </location>
</feature>
<feature type="strand" evidence="55">
    <location>
        <begin position="402"/>
        <end position="405"/>
    </location>
</feature>
<feature type="helix" evidence="55">
    <location>
        <begin position="415"/>
        <end position="417"/>
    </location>
</feature>
<feature type="strand" evidence="61">
    <location>
        <begin position="425"/>
        <end position="427"/>
    </location>
</feature>
<feature type="strand" evidence="55">
    <location>
        <begin position="432"/>
        <end position="438"/>
    </location>
</feature>
<feature type="strand" evidence="55">
    <location>
        <begin position="455"/>
        <end position="461"/>
    </location>
</feature>
<feature type="helix" evidence="55">
    <location>
        <begin position="469"/>
        <end position="471"/>
    </location>
</feature>
<feature type="helix" evidence="55">
    <location>
        <begin position="474"/>
        <end position="476"/>
    </location>
</feature>
<feature type="strand" evidence="55">
    <location>
        <begin position="479"/>
        <end position="482"/>
    </location>
</feature>
<feature type="strand" evidence="55">
    <location>
        <begin position="485"/>
        <end position="487"/>
    </location>
</feature>
<feature type="strand" evidence="55">
    <location>
        <begin position="489"/>
        <end position="491"/>
    </location>
</feature>
<feature type="helix" evidence="55">
    <location>
        <begin position="493"/>
        <end position="497"/>
    </location>
</feature>
<feature type="turn" evidence="55">
    <location>
        <begin position="498"/>
        <end position="500"/>
    </location>
</feature>
<feature type="strand" evidence="55">
    <location>
        <begin position="512"/>
        <end position="516"/>
    </location>
</feature>
<feature type="strand" evidence="55">
    <location>
        <begin position="519"/>
        <end position="528"/>
    </location>
</feature>
<feature type="strand" evidence="55">
    <location>
        <begin position="531"/>
        <end position="534"/>
    </location>
</feature>
<feature type="strand" evidence="55">
    <location>
        <begin position="537"/>
        <end position="543"/>
    </location>
</feature>
<feature type="strand" evidence="55">
    <location>
        <begin position="545"/>
        <end position="548"/>
    </location>
</feature>
<feature type="strand" evidence="55">
    <location>
        <begin position="551"/>
        <end position="554"/>
    </location>
</feature>
<feature type="strand" evidence="55">
    <location>
        <begin position="568"/>
        <end position="573"/>
    </location>
</feature>
<feature type="strand" evidence="55">
    <location>
        <begin position="576"/>
        <end position="585"/>
    </location>
</feature>
<feature type="strand" evidence="55">
    <location>
        <begin position="588"/>
        <end position="592"/>
    </location>
</feature>
<feature type="strand" evidence="55">
    <location>
        <begin position="595"/>
        <end position="608"/>
    </location>
</feature>
<feature type="strand" evidence="55">
    <location>
        <begin position="612"/>
        <end position="616"/>
    </location>
</feature>
<feature type="strand" evidence="55">
    <location>
        <begin position="625"/>
        <end position="629"/>
    </location>
</feature>
<feature type="helix" evidence="61">
    <location>
        <begin position="630"/>
        <end position="632"/>
    </location>
</feature>
<feature type="helix" evidence="56">
    <location>
        <begin position="651"/>
        <end position="676"/>
    </location>
</feature>
<feature type="helix" evidence="57">
    <location>
        <begin position="715"/>
        <end position="717"/>
    </location>
</feature>
<feature type="strand" evidence="57">
    <location>
        <begin position="718"/>
        <end position="729"/>
    </location>
</feature>
<feature type="strand" evidence="57">
    <location>
        <begin position="731"/>
        <end position="737"/>
    </location>
</feature>
<feature type="strand" evidence="58">
    <location>
        <begin position="740"/>
        <end position="743"/>
    </location>
</feature>
<feature type="strand" evidence="57">
    <location>
        <begin position="746"/>
        <end position="752"/>
    </location>
</feature>
<feature type="helix" evidence="57">
    <location>
        <begin position="762"/>
        <end position="773"/>
    </location>
</feature>
<feature type="strand" evidence="58">
    <location>
        <begin position="778"/>
        <end position="780"/>
    </location>
</feature>
<feature type="strand" evidence="57">
    <location>
        <begin position="783"/>
        <end position="787"/>
    </location>
</feature>
<feature type="strand" evidence="57">
    <location>
        <begin position="789"/>
        <end position="791"/>
    </location>
</feature>
<feature type="strand" evidence="57">
    <location>
        <begin position="793"/>
        <end position="797"/>
    </location>
</feature>
<feature type="helix" evidence="57">
    <location>
        <begin position="804"/>
        <end position="810"/>
    </location>
</feature>
<feature type="helix" evidence="57">
    <location>
        <begin position="812"/>
        <end position="814"/>
    </location>
</feature>
<feature type="helix" evidence="57">
    <location>
        <begin position="817"/>
        <end position="836"/>
    </location>
</feature>
<feature type="helix" evidence="57">
    <location>
        <begin position="846"/>
        <end position="848"/>
    </location>
</feature>
<feature type="strand" evidence="57">
    <location>
        <begin position="849"/>
        <end position="853"/>
    </location>
</feature>
<feature type="strand" evidence="57">
    <location>
        <begin position="856"/>
        <end position="859"/>
    </location>
</feature>
<feature type="helix" evidence="57">
    <location>
        <begin position="864"/>
        <end position="869"/>
    </location>
</feature>
<feature type="helix" evidence="57">
    <location>
        <begin position="884"/>
        <end position="886"/>
    </location>
</feature>
<feature type="helix" evidence="57">
    <location>
        <begin position="889"/>
        <end position="893"/>
    </location>
</feature>
<feature type="helix" evidence="57">
    <location>
        <begin position="899"/>
        <end position="914"/>
    </location>
</feature>
<feature type="turn" evidence="57">
    <location>
        <begin position="920"/>
        <end position="923"/>
    </location>
</feature>
<feature type="turn" evidence="57">
    <location>
        <begin position="926"/>
        <end position="928"/>
    </location>
</feature>
<feature type="helix" evidence="57">
    <location>
        <begin position="929"/>
        <end position="934"/>
    </location>
</feature>
<feature type="helix" evidence="57">
    <location>
        <begin position="947"/>
        <end position="955"/>
    </location>
</feature>
<feature type="helix" evidence="57">
    <location>
        <begin position="961"/>
        <end position="963"/>
    </location>
</feature>
<feature type="helix" evidence="57">
    <location>
        <begin position="967"/>
        <end position="977"/>
    </location>
</feature>
<feature type="helix" evidence="57">
    <location>
        <begin position="981"/>
        <end position="983"/>
    </location>
</feature>
<name>ERBB4_HUMAN</name>
<sequence length="1308" mass="146808">MKPATGLWVWVSLLVAAGTVQPSDSQSVCAGTENKLSSLSDLEQQYRALRKYYENCEVVMGNLEITSIEHNRDLSFLRSVREVTGYVLVALNQFRYLPLENLRIIRGTKLYEDRYALAIFLNYRKDGNFGLQELGLKNLTEILNGGVYVDQNKFLCYADTIHWQDIVRNPWPSNLTLVSTNGSSGCGRCHKSCTGRCWGPTENHCQTLTRTVCAEQCDGRCYGPYVSDCCHRECAGGCSGPKDTDCFACMNFNDSGACVTQCPQTFVYNPTTFQLEHNFNAKYTYGAFCVKKCPHNFVVDSSSCVRACPSSKMEVEENGIKMCKPCTDICPKACDGIGTGSLMSAQTVDSSNIDKFINCTKINGNLIFLVTGIHGDPYNAIEAIDPEKLNVFRTVREITGFLNIQSWPPNMTDFSVFSNLVTIGGRVLYSGLSLLILKQQGITSLQFQSLKEISAGNIYITDNSNLCYYHTINWTTLFSTINQRIVIRDNRKAENCTAEGMVCNHLCSSDGCWGPGPDQCLSCRRFSRGRICIESCNLYDGEFREFENGSICVECDPQCEKMEDGLLTCHGPGPDNCTKCSHFKDGPNCVEKCPDGLQGANSFIFKYADPDRECHPCHPNCTQGCNGPTSHDCIYYPWTGHSTLPQHARTPLIAAGVIGGLFILVIVGLTFAVYVRRKSIKKKRALRRFLETELVEPLTPSGTAPNQAQLRILKETELKRVKVLGSGAFGTVYKGIWVPEGETVKIPVAIKILNETTGPKANVEFMDEALIMASMDHPHLVRLLGVCLSPTIQLVTQLMPHGCLLEYVHEHKDNIGSQLLLNWCVQIAKGMMYLEERRLVHRDLAARNVLVKSPNHVKITDFGLARLLEGDEKEYNADGGKMPIKWMALECIHYRKFTHQSDVWSYGVTIWELMTFGGKPYDGIPTREIPDLLEKGERLPQPPICTIDVYMVMVKCWMIDADSRPKFKELAAEFSRMARDPQRYLVIQGDDRMKLPSPNDSKFFQNLLDEEDLEDMMDAEEYLVPQAFNIPPPIYTSRARIDSNRSEIGHSPPPAYTPMSGNQFVYRDGGFAAEQGVSVPYRAPTSTIPEAPVAQGATAEIFDDSCCNGTLRKPVAPHVQEDSSTQRYSADPTVFAPERSPRGELDEEGYMTPMRDKPKQEYLNPVEENPFVSRRKNGDLQALDNPEYHNASNGPPKAEDEYVNEPLYLNTFANTLGKAEYLKNNILSMPEKAKKAFDNPDYWNHSLPPRSTLQHPDYLQEYSTKYFYKQNGRIRPIVAENPEYLSEFSLKPGTVLPPPPYRHRNTVV</sequence>
<protein>
    <recommendedName>
        <fullName>Receptor tyrosine-protein kinase erbB-4</fullName>
        <ecNumber>2.7.10.1</ecNumber>
    </recommendedName>
    <alternativeName>
        <fullName>Proto-oncogene-like protein c-ErbB-4</fullName>
    </alternativeName>
    <alternativeName>
        <fullName>Tyrosine kinase-type cell surface receptor HER4</fullName>
    </alternativeName>
    <alternativeName>
        <fullName>p180erbB4</fullName>
    </alternativeName>
    <component>
        <recommendedName>
            <fullName>ERBB4 intracellular domain</fullName>
            <shortName>4ICD</shortName>
            <shortName>E4ICD</shortName>
        </recommendedName>
        <alternativeName>
            <fullName>s80HER4</fullName>
        </alternativeName>
    </component>
</protein>